<sequence>MAALSGGGGGGAEPGQALFNGDMEPEAGAGAGAAASSAADPAIPEEVWNIKQMIKLTQEHIEALLDKFGGEHNPPSIYLEAYEEYTSKLDALQQREQQLLESLGNGTDFSVSSSASMDTVTSSSSSSLSVLPSSLSVFQNPTDVARSNPKSPQKPIVRVFLPNKQRTVVPARCGVTVRDSLKKALMMRGLIPECCAVYRIQDGEKKPIGWDTDISWLTGEELHVEVLENVPLTTHNFVRKTFFTLAFCDFCRKLLFQGFRCQTCGYKFHQRCSTEVPLMCVNYDQLDLLFVSKFFEHHPIPQEEASLAETALTSGSSPSAPASDSIGPQILTSPSPSKSIPIPQPFRPADEDHRNQFGQRDRSSSAPNVHINTIEPVNIDDLIRDQGFRGDGGSTTGLSATPPASLPGSLTNVKALQKSPGPQRERKSSSSSEDRNRMKTLGRRDSSDDWEIPDGQITVGQRIGSGSFGTVYKGKWHGDVAVKMLNVTAPTPQQLQAFKNEVGVLRKTRHVNILLFMGYSTKPQLAIVTQWCEGSSLYHHLHIIETKFEMIKLIDIARQTAQGMDYLHAKSIIHRDLKSNNIFLHEDLTVKIGDFGLATVKSRWSGSHQFEQLSGSILWMAPEVIRMQDKNPYSFQSDVYAFGIVLYELMTGQLPYSNINNRDQIIFMVGRGYLSPDLSKVRSNCPKAMKRLMAECLKKKRDERPLFPQILASIELLARSLPKIHRSASEPSLNRAGFQTEDFSLYACASPKTPIQAGGYGAFPVH</sequence>
<organism>
    <name type="scientific">Homo sapiens</name>
    <name type="common">Human</name>
    <dbReference type="NCBI Taxonomy" id="9606"/>
    <lineage>
        <taxon>Eukaryota</taxon>
        <taxon>Metazoa</taxon>
        <taxon>Chordata</taxon>
        <taxon>Craniata</taxon>
        <taxon>Vertebrata</taxon>
        <taxon>Euteleostomi</taxon>
        <taxon>Mammalia</taxon>
        <taxon>Eutheria</taxon>
        <taxon>Euarchontoglires</taxon>
        <taxon>Primates</taxon>
        <taxon>Haplorrhini</taxon>
        <taxon>Catarrhini</taxon>
        <taxon>Hominidae</taxon>
        <taxon>Homo</taxon>
    </lineage>
</organism>
<accession>P15056</accession>
<accession>A4D1T4</accession>
<accession>B6HY61</accession>
<accession>B6HY62</accession>
<accession>B6HY63</accession>
<accession>B6HY64</accession>
<accession>B6HY65</accession>
<accession>B6HY66</accession>
<accession>Q13878</accession>
<accession>Q3MIN6</accession>
<accession>Q9UDP8</accession>
<accession>Q9Y6T3</accession>
<proteinExistence type="evidence at protein level"/>
<name>BRAF_HUMAN</name>
<feature type="initiator methionine" description="Removed" evidence="36">
    <location>
        <position position="1"/>
    </location>
</feature>
<feature type="chain" id="PRO_0000085665" description="Serine/threonine-protein kinase B-raf">
    <location>
        <begin position="2"/>
        <end position="766"/>
    </location>
</feature>
<feature type="domain" description="RBD" evidence="5">
    <location>
        <begin position="155"/>
        <end position="227"/>
    </location>
</feature>
<feature type="domain" description="Protein kinase" evidence="3">
    <location>
        <begin position="457"/>
        <end position="717"/>
    </location>
</feature>
<feature type="zinc finger region" description="Phorbol-ester/DAG-type" evidence="4">
    <location>
        <begin position="234"/>
        <end position="280"/>
    </location>
</feature>
<feature type="region of interest" description="Disordered" evidence="7">
    <location>
        <begin position="1"/>
        <end position="38"/>
    </location>
</feature>
<feature type="region of interest" description="Disordered" evidence="7">
    <location>
        <begin position="308"/>
        <end position="454"/>
    </location>
</feature>
<feature type="compositionally biased region" description="Gly residues" evidence="7">
    <location>
        <begin position="1"/>
        <end position="13"/>
    </location>
</feature>
<feature type="compositionally biased region" description="Low complexity" evidence="7">
    <location>
        <begin position="314"/>
        <end position="341"/>
    </location>
</feature>
<feature type="compositionally biased region" description="Basic and acidic residues" evidence="7">
    <location>
        <begin position="348"/>
        <end position="363"/>
    </location>
</feature>
<feature type="compositionally biased region" description="Basic and acidic residues" evidence="7">
    <location>
        <begin position="423"/>
        <end position="447"/>
    </location>
</feature>
<feature type="active site" description="Proton acceptor" evidence="3 6">
    <location>
        <position position="576"/>
    </location>
</feature>
<feature type="binding site" evidence="1">
    <location>
        <position position="235"/>
    </location>
    <ligand>
        <name>Zn(2+)</name>
        <dbReference type="ChEBI" id="CHEBI:29105"/>
        <label>1</label>
    </ligand>
</feature>
<feature type="binding site" evidence="1">
    <location>
        <position position="248"/>
    </location>
    <ligand>
        <name>Zn(2+)</name>
        <dbReference type="ChEBI" id="CHEBI:29105"/>
        <label>2</label>
    </ligand>
</feature>
<feature type="binding site" evidence="1">
    <location>
        <position position="251"/>
    </location>
    <ligand>
        <name>Zn(2+)</name>
        <dbReference type="ChEBI" id="CHEBI:29105"/>
        <label>2</label>
    </ligand>
</feature>
<feature type="binding site" evidence="1">
    <location>
        <position position="261"/>
    </location>
    <ligand>
        <name>Zn(2+)</name>
        <dbReference type="ChEBI" id="CHEBI:29105"/>
        <label>1</label>
    </ligand>
</feature>
<feature type="binding site" evidence="1">
    <location>
        <position position="264"/>
    </location>
    <ligand>
        <name>Zn(2+)</name>
        <dbReference type="ChEBI" id="CHEBI:29105"/>
        <label>1</label>
    </ligand>
</feature>
<feature type="binding site" evidence="1">
    <location>
        <position position="269"/>
    </location>
    <ligand>
        <name>Zn(2+)</name>
        <dbReference type="ChEBI" id="CHEBI:29105"/>
        <label>2</label>
    </ligand>
</feature>
<feature type="binding site" evidence="1">
    <location>
        <position position="272"/>
    </location>
    <ligand>
        <name>Zn(2+)</name>
        <dbReference type="ChEBI" id="CHEBI:29105"/>
        <label>2</label>
    </ligand>
</feature>
<feature type="binding site" evidence="1">
    <location>
        <position position="280"/>
    </location>
    <ligand>
        <name>Zn(2+)</name>
        <dbReference type="ChEBI" id="CHEBI:29105"/>
        <label>1</label>
    </ligand>
</feature>
<feature type="binding site" evidence="3">
    <location>
        <begin position="463"/>
        <end position="471"/>
    </location>
    <ligand>
        <name>ATP</name>
        <dbReference type="ChEBI" id="CHEBI:30616"/>
    </ligand>
</feature>
<feature type="binding site" evidence="3">
    <location>
        <position position="483"/>
    </location>
    <ligand>
        <name>ATP</name>
        <dbReference type="ChEBI" id="CHEBI:30616"/>
    </ligand>
</feature>
<feature type="site" description="Breakpoint for translocation to form KIAA1549-BRAF fusion protein">
    <location>
        <begin position="380"/>
        <end position="381"/>
    </location>
</feature>
<feature type="site" description="Breakpoint for translocation to form KIAA1549-BRAF fusion protein">
    <location>
        <begin position="438"/>
        <end position="439"/>
    </location>
</feature>
<feature type="modified residue" description="N-acetylalanine" evidence="36">
    <location>
        <position position="2"/>
    </location>
</feature>
<feature type="modified residue" description="Phosphoserine" evidence="44 45">
    <location>
        <position position="151"/>
    </location>
</feature>
<feature type="modified residue" description="Phosphoserine" evidence="2">
    <location>
        <position position="333"/>
    </location>
</feature>
<feature type="modified residue" description="Phosphoserine; by SGK1" evidence="8 36 44">
    <location>
        <position position="365"/>
    </location>
</feature>
<feature type="modified residue" description="Phosphothreonine; by autocatalysis" evidence="14">
    <location>
        <position position="373"/>
    </location>
</feature>
<feature type="modified residue" description="Phosphothreonine" evidence="36">
    <location>
        <position position="396"/>
    </location>
</feature>
<feature type="modified residue" description="Phosphoserine" evidence="36">
    <location>
        <position position="399"/>
    </location>
</feature>
<feature type="modified residue" description="Phosphothreonine" evidence="36 41 42 44">
    <location>
        <position position="401"/>
    </location>
</feature>
<feature type="modified residue" description="Phosphoserine" evidence="42 44">
    <location>
        <position position="446"/>
    </location>
</feature>
<feature type="modified residue" description="Phosphoserine" evidence="42">
    <location>
        <position position="447"/>
    </location>
</feature>
<feature type="modified residue" description="Omega-N-methylarginine; by PRMT5" evidence="26">
    <location>
        <position position="671"/>
    </location>
</feature>
<feature type="modified residue" description="Phosphoserine" evidence="36 42 43 44">
    <location>
        <position position="729"/>
    </location>
</feature>
<feature type="modified residue" description="Phosphoserine" evidence="2">
    <location>
        <position position="750"/>
    </location>
</feature>
<feature type="modified residue" description="Phosphothreonine; by MAPK1" evidence="23">
    <location>
        <position position="753"/>
    </location>
</feature>
<feature type="cross-link" description="Glycyl lysine isopeptide (Lys-Gly) (interchain with G-Cter in ubiquitin)" evidence="29">
    <location>
        <position position="578"/>
    </location>
</feature>
<feature type="sequence variant" id="VAR_058620" description="In NS7; dbSNP:rs387906660." evidence="22">
    <original>T</original>
    <variation>M</variation>
    <location>
        <position position="241"/>
    </location>
</feature>
<feature type="sequence variant" id="VAR_058621" description="In CFC1 and LPRD3; dbSNP:rs387906661." evidence="19 22">
    <original>T</original>
    <variation>P</variation>
    <location>
        <position position="241"/>
    </location>
</feature>
<feature type="sequence variant" id="VAR_058622" description="In NS7; dbSNP:rs387906660." evidence="22">
    <original>T</original>
    <variation>R</variation>
    <location>
        <position position="241"/>
    </location>
</feature>
<feature type="sequence variant" id="VAR_065171" description="In CFC1; dbSNP:rs397507465." evidence="19">
    <original>T</original>
    <variation>P</variation>
    <location>
        <position position="244"/>
    </location>
</feature>
<feature type="sequence variant" id="VAR_058623" description="In CFC1; dbSNP:rs397507466." evidence="22">
    <original>L</original>
    <variation>F</variation>
    <location>
        <position position="245"/>
    </location>
</feature>
<feature type="sequence variant" id="VAR_026113" description="In CFC1; dbSNP:rs180177034." evidence="16 19 22">
    <original>A</original>
    <variation>P</variation>
    <location>
        <position position="246"/>
    </location>
</feature>
<feature type="sequence variant" id="VAR_026114" description="In CFC1; dbSNP:rs180177035." evidence="15 16 19 22">
    <original>Q</original>
    <variation>R</variation>
    <location>
        <position position="257"/>
    </location>
</feature>
<feature type="sequence variant" id="VAR_065172" description="In CFC1; dbSNP:rs397507470." evidence="19">
    <original>Q</original>
    <variation>K</variation>
    <location>
        <position position="262"/>
    </location>
</feature>
<feature type="sequence variant" id="VAR_058624" description="In CFC1; dbSNP:rs2129044284." evidence="22">
    <original>E</original>
    <variation>K</variation>
    <location>
        <position position="275"/>
    </location>
</feature>
<feature type="sequence variant" id="VAR_040391" description="In dbSNP:rs34776339." evidence="18">
    <original>P</original>
    <variation>S</variation>
    <location>
        <position position="301"/>
    </location>
</feature>
<feature type="sequence variant" id="VAR_018613" description="In CRC; dbSNP:rs180177032." evidence="10">
    <original>R</original>
    <variation>I</variation>
    <location>
        <position position="462"/>
    </location>
</feature>
<feature type="sequence variant" id="VAR_018614" description="In CRC; dbSNP:rs180177033." evidence="10">
    <original>I</original>
    <variation>S</variation>
    <location>
        <position position="463"/>
    </location>
</feature>
<feature type="sequence variant" id="VAR_018615" description="In CRC; dbSNP:rs121913348." evidence="9 10">
    <original>G</original>
    <variation>E</variation>
    <location>
        <position position="464"/>
    </location>
</feature>
<feature type="sequence variant" id="VAR_018616" description="In a colorectal cancer cell line; elevated kinase activity; efficiently induces cell transformation; dbSNP:rs121913348." evidence="9">
    <original>G</original>
    <variation>V</variation>
    <location>
        <position position="464"/>
    </location>
</feature>
<feature type="sequence variant" id="VAR_018617" description="In melanoma; dbSNP:rs121913351." evidence="9">
    <original>G</original>
    <variation>A</variation>
    <location>
        <position position="466"/>
    </location>
</feature>
<feature type="sequence variant" id="VAR_018618" description="In melanoma; dbSNP:rs121913351." evidence="9">
    <original>G</original>
    <variation>E</variation>
    <location>
        <position position="466"/>
    </location>
</feature>
<feature type="sequence variant" id="VAR_018512" description="In LNCR; dbSNP:rs121913351." evidence="9 11">
    <original>G</original>
    <variation>V</variation>
    <location>
        <position position="466"/>
    </location>
</feature>
<feature type="sequence variant" id="VAR_035096" description="In CFC1; dbSNP:rs869025606." evidence="15">
    <original>S</original>
    <variation>A</variation>
    <location>
        <position position="467"/>
    </location>
</feature>
<feature type="sequence variant" id="VAR_035097" description="In CFC1; dbSNP:rs397507473." evidence="15 19">
    <original>F</original>
    <variation>S</variation>
    <location>
        <position position="468"/>
    </location>
</feature>
<feature type="sequence variant" id="VAR_018620" description="In NHL; also in a lung adenocarcinoma sample; somatic mutation; elevated kinase activity; efficiently induces cell transformation; dbSNP:rs121913355." evidence="9 13 18">
    <original>G</original>
    <variation>A</variation>
    <location>
        <position position="469"/>
    </location>
</feature>
<feature type="sequence variant" id="VAR_018621" description="In CFC1 and colon cancer; dbSNP:rs121913355." evidence="9 15 16 19 22">
    <original>G</original>
    <variation>E</variation>
    <location>
        <position position="469"/>
    </location>
</feature>
<feature type="sequence variant" id="VAR_018622" description="In NHL; dbSNP:rs121913357." evidence="13">
    <original>G</original>
    <variation>R</variation>
    <location>
        <position position="469"/>
    </location>
</feature>
<feature type="sequence variant" id="VAR_040392" description="In a colorectal adenocarcinoma sample; somatic mutation; dbSNP:rs121913355." evidence="18">
    <original>G</original>
    <variation>V</variation>
    <location>
        <position position="469"/>
    </location>
</feature>
<feature type="sequence variant" id="VAR_026115" description="In CFC1; dbSNP:rs180177036." evidence="15 16 22">
    <original>L</original>
    <variation>F</variation>
    <location>
        <position position="485"/>
    </location>
</feature>
<feature type="sequence variant" id="VAR_026116" description="In CFC1; dbSNP:rs180177037." evidence="15 16 19">
    <original>K</original>
    <variation>E</variation>
    <location>
        <position position="499"/>
    </location>
</feature>
<feature type="sequence variant" id="VAR_058625" description="In CFC1; dbSNP:rs397507476." evidence="19 22">
    <original>K</original>
    <variation>N</variation>
    <location>
        <position position="499"/>
    </location>
</feature>
<feature type="sequence variant" id="VAR_026117" description="In CFC1; dbSNP:rs180177039." evidence="15 16">
    <original>E</original>
    <variation>G</variation>
    <location>
        <position position="501"/>
    </location>
</feature>
<feature type="sequence variant" id="VAR_026118" description="In CFC1; dbSNP:rs180177038." evidence="15 16 22">
    <original>E</original>
    <variation>K</variation>
    <location>
        <position position="501"/>
    </location>
</feature>
<feature type="sequence variant" id="VAR_058626" description="In CFC1; dbSNP:rs869025340." evidence="22">
    <original>L</original>
    <variation>P</variation>
    <location>
        <position position="525"/>
    </location>
</feature>
<feature type="sequence variant" id="VAR_058627" description="In NS7; dbSNP:rs606231228." evidence="22">
    <original>W</original>
    <variation>C</variation>
    <location>
        <position position="531"/>
    </location>
</feature>
<feature type="sequence variant" id="VAR_065173" description="In CFC1; dbSNP:rs2128999571." evidence="19">
    <original>N</original>
    <variation>D</variation>
    <location>
        <position position="580"/>
    </location>
</feature>
<feature type="sequence variant" id="VAR_026119" description="In CFC1; dbSNP:rs180177040." evidence="15 16 19">
    <original>N</original>
    <variation>D</variation>
    <location>
        <position position="581"/>
    </location>
</feature>
<feature type="sequence variant" id="VAR_040393" description="In a colorectal adenocarcinoma sample; somatic mutation; dbSNP:rs121913370." evidence="18">
    <original>N</original>
    <variation>S</variation>
    <location>
        <position position="581"/>
    </location>
</feature>
<feature type="sequence variant" id="VAR_018623" description="In ovarian cancer; dbSNP:rs121913340." evidence="9">
    <original>E</original>
    <variation>K</variation>
    <location>
        <position position="586"/>
    </location>
</feature>
<feature type="sequence variant" id="VAR_018624" description="In NHL; dbSNP:rs121913338." evidence="13">
    <original>D</original>
    <variation>G</variation>
    <location>
        <position position="594"/>
    </location>
</feature>
<feature type="sequence variant" id="VAR_018625" description="In CFC1; also found in colon cancer; dbSNP:rs121913341." evidence="9 15 19 22">
    <original>F</original>
    <variation>L</variation>
    <location>
        <position position="595"/>
    </location>
</feature>
<feature type="sequence variant" id="VAR_018626" description="In a colorectal adenocarcinoma sample; somatic mutation; dbSNP:rs121913361." evidence="9 18">
    <original>G</original>
    <variation>R</variation>
    <location>
        <position position="596"/>
    </location>
</feature>
<feature type="sequence variant" id="VAR_035098" description="In CFC1; dbSNP:rs397507483." evidence="15">
    <original>G</original>
    <variation>V</variation>
    <location>
        <position position="596"/>
    </location>
</feature>
<feature type="sequence variant" id="VAR_018513" description="In LNCR; also found in an ovarian serous carcinoma sample; somatic mutation; dbSNP:rs121913366." evidence="9 11 18">
    <original>L</original>
    <variation>R</variation>
    <location>
        <position position="597"/>
    </location>
</feature>
<feature type="sequence variant" id="VAR_018627" description="In NS7; also in a lung adenocarcinoma sample; somatic mutation; elevated kinase activity; efficiently induces cell transformation; dbSNP:rs121913369." evidence="9 18 22">
    <original>L</original>
    <variation>V</variation>
    <location>
        <position position="597"/>
    </location>
</feature>
<feature type="sequence variant" id="VAR_058628" description="In CFC1; dbSNP:rs121913375." evidence="22">
    <original>T</original>
    <variation>R</variation>
    <location>
        <position position="599"/>
    </location>
</feature>
<feature type="sequence variant" id="VAR_018628" description="In a melanoma cell line; requires 2 nucleotide substitutions; dbSNP:rs121913377." evidence="9">
    <original>V</original>
    <variation>D</variation>
    <location>
        <position position="600"/>
    </location>
</feature>
<feature type="sequence variant" id="VAR_018629" description="In CRC; also found in sarcoma, metastatic melanoma, ovarian serous carcinoma, pilocytic astrocytoma; somatic mutation; most common mutation; constitutive and elevated kinase activity; efficiently induces cell transformation; suppression of mutation in melanoma causes growth arrest and promotes apoptosis; loss of regulation by PMRT5; dbSNP:rs113488022." evidence="9 10 12 17 18 26 28 30">
    <original>V</original>
    <variation>E</variation>
    <location>
        <position position="600"/>
    </location>
</feature>
<feature type="sequence variant" id="VAR_018630" description="In CRC; dbSNP:rs121913364." evidence="10">
    <original>K</original>
    <variation>E</variation>
    <location>
        <position position="601"/>
    </location>
</feature>
<feature type="sequence variant" id="VAR_058629" description="In CFC1; dbSNP:rs121913364." evidence="22">
    <original>K</original>
    <variation>Q</variation>
    <location>
        <position position="601"/>
    </location>
</feature>
<feature type="sequence variant" id="VAR_058630" description="In CFC1; dbSNP:rs180177042." evidence="22">
    <original>D</original>
    <variation>E</variation>
    <location>
        <position position="638"/>
    </location>
</feature>
<feature type="sequence variant" id="VAR_058631" description="In CFC1; dbSNP:rs397507486." evidence="22">
    <original>Q</original>
    <variation>R</variation>
    <location>
        <position position="709"/>
    </location>
</feature>
<feature type="mutagenesis site" description="Reduces interaction with KSR1 and MAP2K1 and thus phosphorylation of MAP2K1." evidence="32">
    <original>M</original>
    <variation>D</variation>
    <location>
        <position position="53"/>
    </location>
</feature>
<feature type="mutagenesis site" description="Reduces interaction with KSR1 and MAP2K1 and thus phosphorylation of MAP2K1." evidence="32">
    <original>K</original>
    <variation>E</variation>
    <location>
        <position position="88"/>
    </location>
</feature>
<feature type="mutagenesis site" description="Reduces kinase activity with MAP2K1." evidence="25">
    <original>K</original>
    <variation>S</variation>
    <location>
        <position position="483"/>
    </location>
</feature>
<feature type="mutagenesis site" description="Loss of MAP2K1-mediated-BRAF-KSR1 dimerization." evidence="32">
    <original>R</original>
    <variation>H</variation>
    <location>
        <position position="509"/>
    </location>
</feature>
<feature type="mutagenesis site" description="Blocks EGF-induced ubiquitination and ERK activation." evidence="29">
    <original>K</original>
    <variation>R</variation>
    <location>
        <position position="578"/>
    </location>
</feature>
<feature type="mutagenesis site" description="No effect on MAP2K1-mediated-BRAF-KSR1 dimerization, however loss of BRAF-mediated phosphorylation of MAP2K1." evidence="32">
    <original>I</original>
    <variation>R</variation>
    <location>
        <position position="666"/>
    </location>
</feature>
<feature type="mutagenesis site" description="Increased kinase activity and stability in response to EGF treatment." evidence="26">
    <original>R</original>
    <variation>K</variation>
    <location>
        <position position="671"/>
    </location>
</feature>
<feature type="sequence conflict" description="In Ref. 11; AAA96495." evidence="37" ref="11">
    <original>H</original>
    <variation>D</variation>
    <location>
        <position position="766"/>
    </location>
</feature>
<feature type="helix" evidence="49">
    <location>
        <begin position="43"/>
        <end position="68"/>
    </location>
</feature>
<feature type="helix" evidence="49">
    <location>
        <begin position="76"/>
        <end position="103"/>
    </location>
</feature>
<feature type="strand" evidence="46">
    <location>
        <begin position="156"/>
        <end position="161"/>
    </location>
</feature>
<feature type="turn" evidence="46">
    <location>
        <begin position="162"/>
        <end position="164"/>
    </location>
</feature>
<feature type="strand" evidence="46">
    <location>
        <begin position="165"/>
        <end position="170"/>
    </location>
</feature>
<feature type="helix" evidence="46">
    <location>
        <begin position="177"/>
        <end position="186"/>
    </location>
</feature>
<feature type="turn" evidence="46">
    <location>
        <begin position="187"/>
        <end position="189"/>
    </location>
</feature>
<feature type="helix" evidence="46">
    <location>
        <begin position="192"/>
        <end position="194"/>
    </location>
</feature>
<feature type="strand" evidence="46">
    <location>
        <begin position="195"/>
        <end position="199"/>
    </location>
</feature>
<feature type="strand" evidence="46">
    <location>
        <begin position="206"/>
        <end position="208"/>
    </location>
</feature>
<feature type="helix" evidence="46">
    <location>
        <begin position="214"/>
        <end position="217"/>
    </location>
</feature>
<feature type="strand" evidence="46">
    <location>
        <begin position="221"/>
        <end position="226"/>
    </location>
</feature>
<feature type="helix" evidence="50">
    <location>
        <begin position="448"/>
        <end position="450"/>
    </location>
</feature>
<feature type="helix" evidence="48">
    <location>
        <begin position="454"/>
        <end position="456"/>
    </location>
</feature>
<feature type="strand" evidence="53">
    <location>
        <begin position="458"/>
        <end position="466"/>
    </location>
</feature>
<feature type="strand" evidence="53">
    <location>
        <begin position="469"/>
        <end position="484"/>
    </location>
</feature>
<feature type="strand" evidence="53">
    <location>
        <begin position="487"/>
        <end position="489"/>
    </location>
</feature>
<feature type="helix" evidence="53">
    <location>
        <begin position="492"/>
        <end position="505"/>
    </location>
</feature>
<feature type="strand" evidence="53">
    <location>
        <begin position="516"/>
        <end position="520"/>
    </location>
</feature>
<feature type="strand" evidence="53">
    <location>
        <begin position="522"/>
        <end position="524"/>
    </location>
</feature>
<feature type="strand" evidence="53">
    <location>
        <begin position="526"/>
        <end position="530"/>
    </location>
</feature>
<feature type="strand" evidence="53">
    <location>
        <begin position="534"/>
        <end position="536"/>
    </location>
</feature>
<feature type="helix" evidence="53">
    <location>
        <begin position="537"/>
        <end position="542"/>
    </location>
</feature>
<feature type="strand" evidence="50">
    <location>
        <begin position="543"/>
        <end position="545"/>
    </location>
</feature>
<feature type="helix" evidence="53">
    <location>
        <begin position="550"/>
        <end position="569"/>
    </location>
</feature>
<feature type="helix" evidence="53">
    <location>
        <begin position="579"/>
        <end position="581"/>
    </location>
</feature>
<feature type="strand" evidence="53">
    <location>
        <begin position="582"/>
        <end position="585"/>
    </location>
</feature>
<feature type="turn" evidence="53">
    <location>
        <begin position="586"/>
        <end position="588"/>
    </location>
</feature>
<feature type="strand" evidence="53">
    <location>
        <begin position="589"/>
        <end position="592"/>
    </location>
</feature>
<feature type="turn" evidence="52">
    <location>
        <begin position="598"/>
        <end position="600"/>
    </location>
</feature>
<feature type="turn" evidence="47">
    <location>
        <begin position="602"/>
        <end position="605"/>
    </location>
</feature>
<feature type="helix" evidence="53">
    <location>
        <begin position="609"/>
        <end position="612"/>
    </location>
</feature>
<feature type="helix" evidence="53">
    <location>
        <begin position="614"/>
        <end position="619"/>
    </location>
</feature>
<feature type="helix" evidence="53">
    <location>
        <begin position="622"/>
        <end position="626"/>
    </location>
</feature>
<feature type="strand" evidence="53">
    <location>
        <begin position="629"/>
        <end position="631"/>
    </location>
</feature>
<feature type="helix" evidence="53">
    <location>
        <begin position="635"/>
        <end position="651"/>
    </location>
</feature>
<feature type="turn" evidence="53">
    <location>
        <begin position="655"/>
        <end position="658"/>
    </location>
</feature>
<feature type="helix" evidence="53">
    <location>
        <begin position="662"/>
        <end position="671"/>
    </location>
</feature>
<feature type="helix" evidence="53">
    <location>
        <begin position="678"/>
        <end position="680"/>
    </location>
</feature>
<feature type="strand" evidence="48">
    <location>
        <begin position="683"/>
        <end position="685"/>
    </location>
</feature>
<feature type="helix" evidence="53">
    <location>
        <begin position="687"/>
        <end position="696"/>
    </location>
</feature>
<feature type="helix" evidence="53">
    <location>
        <begin position="701"/>
        <end position="703"/>
    </location>
</feature>
<feature type="helix" evidence="53">
    <location>
        <begin position="707"/>
        <end position="721"/>
    </location>
</feature>
<feature type="strand" evidence="51">
    <location>
        <begin position="723"/>
        <end position="726"/>
    </location>
</feature>
<reference key="1">
    <citation type="journal article" date="1992" name="Mol. Cell. Biol.">
        <title>95-kilodalton B-Raf serine/threonine kinase: identification of the protein and its major autophosphorylation site.</title>
        <authorList>
            <person name="Stephens R.M."/>
            <person name="Sithanandam G."/>
            <person name="Copeland T.D."/>
            <person name="Kaplan D.R."/>
            <person name="Rapp U.R."/>
            <person name="Morrison D.K."/>
        </authorList>
    </citation>
    <scope>NUCLEOTIDE SEQUENCE [MRNA]</scope>
    <scope>PARTIAL PROTEIN SEQUENCE</scope>
    <scope>FUNCTION</scope>
    <scope>PHOSPHORYLATION AT THR-373</scope>
    <source>
        <tissue>Testis</tissue>
    </source>
</reference>
<reference key="2">
    <citation type="submission" date="2004-01" db="EMBL/GenBank/DDBJ databases">
        <authorList>
            <person name="Albert S."/>
            <person name="Wixler L."/>
            <person name="Rapp U.R."/>
        </authorList>
    </citation>
    <scope>SEQUENCE REVISION TO 31-33</scope>
</reference>
<reference key="3">
    <citation type="submission" date="2008-03" db="EMBL/GenBank/DDBJ databases">
        <authorList>
            <consortium name="NIEHS SNPs program"/>
        </authorList>
    </citation>
    <scope>NUCLEOTIDE SEQUENCE [GENOMIC DNA]</scope>
</reference>
<reference key="4">
    <citation type="journal article" date="2003" name="Science">
        <title>Human chromosome 7: DNA sequence and biology.</title>
        <authorList>
            <person name="Scherer S.W."/>
            <person name="Cheung J."/>
            <person name="MacDonald J.R."/>
            <person name="Osborne L.R."/>
            <person name="Nakabayashi K."/>
            <person name="Herbrick J.-A."/>
            <person name="Carson A.R."/>
            <person name="Parker-Katiraee L."/>
            <person name="Skaug J."/>
            <person name="Khaja R."/>
            <person name="Zhang J."/>
            <person name="Hudek A.K."/>
            <person name="Li M."/>
            <person name="Haddad M."/>
            <person name="Duggan G.E."/>
            <person name="Fernandez B.A."/>
            <person name="Kanematsu E."/>
            <person name="Gentles S."/>
            <person name="Christopoulos C.C."/>
            <person name="Choufani S."/>
            <person name="Kwasnicka D."/>
            <person name="Zheng X.H."/>
            <person name="Lai Z."/>
            <person name="Nusskern D.R."/>
            <person name="Zhang Q."/>
            <person name="Gu Z."/>
            <person name="Lu F."/>
            <person name="Zeesman S."/>
            <person name="Nowaczyk M.J."/>
            <person name="Teshima I."/>
            <person name="Chitayat D."/>
            <person name="Shuman C."/>
            <person name="Weksberg R."/>
            <person name="Zackai E.H."/>
            <person name="Grebe T.A."/>
            <person name="Cox S.R."/>
            <person name="Kirkpatrick S.J."/>
            <person name="Rahman N."/>
            <person name="Friedman J.M."/>
            <person name="Heng H.H.Q."/>
            <person name="Pelicci P.G."/>
            <person name="Lo-Coco F."/>
            <person name="Belloni E."/>
            <person name="Shaffer L.G."/>
            <person name="Pober B."/>
            <person name="Morton C.C."/>
            <person name="Gusella J.F."/>
            <person name="Bruns G.A.P."/>
            <person name="Korf B.R."/>
            <person name="Quade B.J."/>
            <person name="Ligon A.H."/>
            <person name="Ferguson H."/>
            <person name="Higgins A.W."/>
            <person name="Leach N.T."/>
            <person name="Herrick S.R."/>
            <person name="Lemyre E."/>
            <person name="Farra C.G."/>
            <person name="Kim H.-G."/>
            <person name="Summers A.M."/>
            <person name="Gripp K.W."/>
            <person name="Roberts W."/>
            <person name="Szatmari P."/>
            <person name="Winsor E.J.T."/>
            <person name="Grzeschik K.-H."/>
            <person name="Teebi A."/>
            <person name="Minassian B.A."/>
            <person name="Kere J."/>
            <person name="Armengol L."/>
            <person name="Pujana M.A."/>
            <person name="Estivill X."/>
            <person name="Wilson M.D."/>
            <person name="Koop B.F."/>
            <person name="Tosi S."/>
            <person name="Moore G.E."/>
            <person name="Boright A.P."/>
            <person name="Zlotorynski E."/>
            <person name="Kerem B."/>
            <person name="Kroisel P.M."/>
            <person name="Petek E."/>
            <person name="Oscier D.G."/>
            <person name="Mould S.J."/>
            <person name="Doehner H."/>
            <person name="Doehner K."/>
            <person name="Rommens J.M."/>
            <person name="Vincent J.B."/>
            <person name="Venter J.C."/>
            <person name="Li P.W."/>
            <person name="Mural R.J."/>
            <person name="Adams M.D."/>
            <person name="Tsui L.-C."/>
        </authorList>
    </citation>
    <scope>NUCLEOTIDE SEQUENCE [LARGE SCALE GENOMIC DNA]</scope>
</reference>
<reference key="5">
    <citation type="journal article" date="2003" name="Nature">
        <title>The DNA sequence of human chromosome 7.</title>
        <authorList>
            <person name="Hillier L.W."/>
            <person name="Fulton R.S."/>
            <person name="Fulton L.A."/>
            <person name="Graves T.A."/>
            <person name="Pepin K.H."/>
            <person name="Wagner-McPherson C."/>
            <person name="Layman D."/>
            <person name="Maas J."/>
            <person name="Jaeger S."/>
            <person name="Walker R."/>
            <person name="Wylie K."/>
            <person name="Sekhon M."/>
            <person name="Becker M.C."/>
            <person name="O'Laughlin M.D."/>
            <person name="Schaller M.E."/>
            <person name="Fewell G.A."/>
            <person name="Delehaunty K.D."/>
            <person name="Miner T.L."/>
            <person name="Nash W.E."/>
            <person name="Cordes M."/>
            <person name="Du H."/>
            <person name="Sun H."/>
            <person name="Edwards J."/>
            <person name="Bradshaw-Cordum H."/>
            <person name="Ali J."/>
            <person name="Andrews S."/>
            <person name="Isak A."/>
            <person name="Vanbrunt A."/>
            <person name="Nguyen C."/>
            <person name="Du F."/>
            <person name="Lamar B."/>
            <person name="Courtney L."/>
            <person name="Kalicki J."/>
            <person name="Ozersky P."/>
            <person name="Bielicki L."/>
            <person name="Scott K."/>
            <person name="Holmes A."/>
            <person name="Harkins R."/>
            <person name="Harris A."/>
            <person name="Strong C.M."/>
            <person name="Hou S."/>
            <person name="Tomlinson C."/>
            <person name="Dauphin-Kohlberg S."/>
            <person name="Kozlowicz-Reilly A."/>
            <person name="Leonard S."/>
            <person name="Rohlfing T."/>
            <person name="Rock S.M."/>
            <person name="Tin-Wollam A.-M."/>
            <person name="Abbott A."/>
            <person name="Minx P."/>
            <person name="Maupin R."/>
            <person name="Strowmatt C."/>
            <person name="Latreille P."/>
            <person name="Miller N."/>
            <person name="Johnson D."/>
            <person name="Murray J."/>
            <person name="Woessner J.P."/>
            <person name="Wendl M.C."/>
            <person name="Yang S.-P."/>
            <person name="Schultz B.R."/>
            <person name="Wallis J.W."/>
            <person name="Spieth J."/>
            <person name="Bieri T.A."/>
            <person name="Nelson J.O."/>
            <person name="Berkowicz N."/>
            <person name="Wohldmann P.E."/>
            <person name="Cook L.L."/>
            <person name="Hickenbotham M.T."/>
            <person name="Eldred J."/>
            <person name="Williams D."/>
            <person name="Bedell J.A."/>
            <person name="Mardis E.R."/>
            <person name="Clifton S.W."/>
            <person name="Chissoe S.L."/>
            <person name="Marra M.A."/>
            <person name="Raymond C."/>
            <person name="Haugen E."/>
            <person name="Gillett W."/>
            <person name="Zhou Y."/>
            <person name="James R."/>
            <person name="Phelps K."/>
            <person name="Iadanoto S."/>
            <person name="Bubb K."/>
            <person name="Simms E."/>
            <person name="Levy R."/>
            <person name="Clendenning J."/>
            <person name="Kaul R."/>
            <person name="Kent W.J."/>
            <person name="Furey T.S."/>
            <person name="Baertsch R.A."/>
            <person name="Brent M.R."/>
            <person name="Keibler E."/>
            <person name="Flicek P."/>
            <person name="Bork P."/>
            <person name="Suyama M."/>
            <person name="Bailey J.A."/>
            <person name="Portnoy M.E."/>
            <person name="Torrents D."/>
            <person name="Chinwalla A.T."/>
            <person name="Gish W.R."/>
            <person name="Eddy S.R."/>
            <person name="McPherson J.D."/>
            <person name="Olson M.V."/>
            <person name="Eichler E.E."/>
            <person name="Green E.D."/>
            <person name="Waterston R.H."/>
            <person name="Wilson R.K."/>
        </authorList>
    </citation>
    <scope>NUCLEOTIDE SEQUENCE [LARGE SCALE GENOMIC DNA]</scope>
</reference>
<reference key="6">
    <citation type="journal article" date="2004" name="Genome Res.">
        <title>The status, quality, and expansion of the NIH full-length cDNA project: the Mammalian Gene Collection (MGC).</title>
        <authorList>
            <consortium name="The MGC Project Team"/>
        </authorList>
    </citation>
    <scope>NUCLEOTIDE SEQUENCE [LARGE SCALE MRNA]</scope>
    <source>
        <tissue>Liver</tissue>
    </source>
</reference>
<reference key="7">
    <citation type="journal article" date="1992" name="Oncogene">
        <title>Chromosomal assignment of two human B-raf(Rmil) proto-oncogene loci: B-raf-1 encoding the p94Braf/Rmil and B-raf-2, a processed pseudogene.</title>
        <authorList>
            <person name="Eychene A."/>
            <person name="Barnier J.V."/>
            <person name="Apiou F."/>
            <person name="Dutrillaux B."/>
            <person name="Calothy G."/>
        </authorList>
    </citation>
    <scope>NUCLEOTIDE SEQUENCE [GENOMIC DNA] OF 1-200</scope>
    <source>
        <tissue>Placenta</tissue>
    </source>
</reference>
<reference key="8">
    <citation type="submission" date="2008-12" db="UniProtKB">
        <authorList>
            <person name="Bienvenut W.V."/>
            <person name="Boldt K."/>
            <person name="von Kriegsheim A.F."/>
            <person name="Zebisch A."/>
            <person name="Kolch W."/>
        </authorList>
    </citation>
    <scope>PROTEIN SEQUENCE OF 2-51; 56-95; 151-158; 189-199; 253-260; 294-354; 361-424; 444-507; 510-522; 559-570; 579-626; 663-680; 692-698; 702-719; 727-735 AND 753-766</scope>
    <scope>CLEAVAGE OF INITIATOR METHIONINE</scope>
    <scope>ACETYLATION AT ALA-2</scope>
    <scope>PHOSPHORYLATION AT SER-365; THR-396; SER-399; THR-401 AND SER-729</scope>
    <scope>IDENTIFICATION BY MASS SPECTROMETRY</scope>
    <source>
        <tissue>Colon carcinoma</tissue>
        <tissue>Hepatoma</tissue>
    </source>
</reference>
<reference key="9">
    <citation type="journal article" date="1990" name="Oncogene">
        <title>Complete coding sequence of a human B-raf cDNA and detection of B-raf protein kinase with isozyme specific antibodies.</title>
        <authorList>
            <person name="Sithanandam G."/>
            <person name="Kolch W."/>
            <person name="Duh F.-M."/>
            <person name="Rapp U.R."/>
        </authorList>
    </citation>
    <scope>NUCLEOTIDE SEQUENCE [MRNA] OF 117-766</scope>
    <source>
        <tissue>Testis</tissue>
    </source>
</reference>
<reference key="10">
    <citation type="journal article" date="2008" name="Cancer Res.">
        <title>Tandem duplication producing a novel oncogenic BRAF fusion gene defines the majority of pilocytic astrocytomas.</title>
        <authorList>
            <person name="Jones D.T.W."/>
            <person name="Kocialkowski S."/>
            <person name="Liu L."/>
            <person name="Pearson D.M."/>
            <person name="Backlund L.M."/>
            <person name="Ichimura K."/>
            <person name="Collins V.P."/>
        </authorList>
    </citation>
    <scope>NUCLEOTIDE SEQUENCE [MRNA] OF 381-766</scope>
    <scope>DISEASE</scope>
    <scope>CHROMOSOMAL REARRANGEMENT</scope>
    <source>
        <tissue>Brain</tissue>
    </source>
</reference>
<reference key="11">
    <citation type="journal article" date="1988" name="Mol. Cell. Biol.">
        <title>B-raf, a new member of the raf family, is activated by DNA rearrangement.</title>
        <authorList>
            <person name="Ikawa S."/>
            <person name="Fukui M."/>
            <person name="Ueyama Y."/>
            <person name="Tamaoki N."/>
            <person name="Yamamoto T."/>
            <person name="Toyoshima K."/>
        </authorList>
    </citation>
    <scope>NUCLEOTIDE SEQUENCE [MRNA] OF 439-766</scope>
</reference>
<reference key="12">
    <citation type="journal article" date="2001" name="J. Biol. Chem.">
        <title>Serum- and glucocorticoid-inducible kinase SGK phosphorylates and negatively regulates B-Raf.</title>
        <authorList>
            <person name="Zhang B.H."/>
            <person name="Tang E.D."/>
            <person name="Zhu T."/>
            <person name="Greenberg M.E."/>
            <person name="Vojtek A.B."/>
            <person name="Guan K.L."/>
        </authorList>
    </citation>
    <scope>PHOSPHORYLATION AT SER-365 BY SGK1</scope>
</reference>
<reference key="13">
    <citation type="journal article" date="2006" name="Nat. Biotechnol.">
        <title>A probability-based approach for high-throughput protein phosphorylation analysis and site localization.</title>
        <authorList>
            <person name="Beausoleil S.A."/>
            <person name="Villen J."/>
            <person name="Gerber S.A."/>
            <person name="Rush J."/>
            <person name="Gygi S.P."/>
        </authorList>
    </citation>
    <scope>PHOSPHORYLATION [LARGE SCALE ANALYSIS] AT THR-401</scope>
    <scope>IDENTIFICATION BY MASS SPECTROMETRY [LARGE SCALE ANALYSIS]</scope>
    <source>
        <tissue>Cervix carcinoma</tissue>
    </source>
</reference>
<reference key="14">
    <citation type="journal article" date="2008" name="Mol. Cell">
        <title>Kinase-selective enrichment enables quantitative phosphoproteomics of the kinome across the cell cycle.</title>
        <authorList>
            <person name="Daub H."/>
            <person name="Olsen J.V."/>
            <person name="Bairlein M."/>
            <person name="Gnad F."/>
            <person name="Oppermann F.S."/>
            <person name="Korner R."/>
            <person name="Greff Z."/>
            <person name="Keri G."/>
            <person name="Stemmann O."/>
            <person name="Mann M."/>
        </authorList>
    </citation>
    <scope>IDENTIFICATION BY MASS SPECTROMETRY [LARGE SCALE ANALYSIS]</scope>
    <source>
        <tissue>Cervix carcinoma</tissue>
    </source>
</reference>
<reference key="15">
    <citation type="journal article" date="2008" name="Proc. Natl. Acad. Sci. U.S.A.">
        <title>A quantitative atlas of mitotic phosphorylation.</title>
        <authorList>
            <person name="Dephoure N."/>
            <person name="Zhou C."/>
            <person name="Villen J."/>
            <person name="Beausoleil S.A."/>
            <person name="Bakalarski C.E."/>
            <person name="Elledge S.J."/>
            <person name="Gygi S.P."/>
        </authorList>
    </citation>
    <scope>PHOSPHORYLATION [LARGE SCALE ANALYSIS] AT THR-401; SER-446; SER-447 AND SER-729</scope>
    <scope>IDENTIFICATION BY MASS SPECTROMETRY [LARGE SCALE ANALYSIS]</scope>
    <source>
        <tissue>Cervix carcinoma</tissue>
    </source>
</reference>
<reference key="16">
    <citation type="journal article" date="2009" name="J. Biol. Chem.">
        <title>Diacylglycerol kinase eta augments C-Raf activity and B-Raf/C-Raf heterodimerization.</title>
        <authorList>
            <person name="Yasuda S."/>
            <person name="Kai M."/>
            <person name="Imai S."/>
            <person name="Takeishi K."/>
            <person name="Taketomi A."/>
            <person name="Toyota M."/>
            <person name="Kanoh H."/>
            <person name="Sakane F."/>
        </authorList>
    </citation>
    <scope>SUBUNIT</scope>
    <scope>INTERACTION WITH DGKH</scope>
    <scope>SUBCELLULAR LOCATION</scope>
    <scope>PHOSPHORYLATION AT THR-753 BY MAPK1</scope>
</reference>
<reference key="17">
    <citation type="journal article" date="2009" name="Sci. Signal.">
        <title>Quantitative phosphoproteomic analysis of T cell receptor signaling reveals system-wide modulation of protein-protein interactions.</title>
        <authorList>
            <person name="Mayya V."/>
            <person name="Lundgren D.H."/>
            <person name="Hwang S.-I."/>
            <person name="Rezaul K."/>
            <person name="Wu L."/>
            <person name="Eng J.K."/>
            <person name="Rodionov V."/>
            <person name="Han D.K."/>
        </authorList>
    </citation>
    <scope>IDENTIFICATION BY MASS SPECTROMETRY [LARGE SCALE ANALYSIS]</scope>
    <source>
        <tissue>Leukemic T-cell</tissue>
    </source>
</reference>
<reference key="18">
    <citation type="journal article" date="2010" name="Nat. Cell Biol.">
        <title>AKAP-Lbc enhances cyclic AMP control of the ERK1/2 cascade.</title>
        <authorList>
            <person name="Smith F.D."/>
            <person name="Langeberg L.K."/>
            <person name="Cellurale C."/>
            <person name="Pawson T."/>
            <person name="Morrison D.K."/>
            <person name="Davis R.J."/>
            <person name="Scott J.D."/>
        </authorList>
    </citation>
    <scope>INTERACTION WITH AKAP13; MAP2K1 AND KSR1</scope>
</reference>
<reference key="19">
    <citation type="journal article" date="2010" name="Sci. Signal.">
        <title>Quantitative phosphoproteomics reveals widespread full phosphorylation site occupancy during mitosis.</title>
        <authorList>
            <person name="Olsen J.V."/>
            <person name="Vermeulen M."/>
            <person name="Santamaria A."/>
            <person name="Kumar C."/>
            <person name="Miller M.L."/>
            <person name="Jensen L.J."/>
            <person name="Gnad F."/>
            <person name="Cox J."/>
            <person name="Jensen T.S."/>
            <person name="Nigg E.A."/>
            <person name="Brunak S."/>
            <person name="Mann M."/>
        </authorList>
    </citation>
    <scope>IDENTIFICATION BY MASS SPECTROMETRY [LARGE SCALE ANALYSIS]</scope>
    <source>
        <tissue>Cervix carcinoma</tissue>
    </source>
</reference>
<reference key="20">
    <citation type="journal article" date="2011" name="Nature">
        <title>A Raf-induced allosteric transition of KSR stimulates phosphorylation of MEK.</title>
        <authorList>
            <person name="Brennan D.F."/>
            <person name="Dar A.C."/>
            <person name="Hertz N.T."/>
            <person name="Chao W.C."/>
            <person name="Burlingame A.L."/>
            <person name="Shokat K.M."/>
            <person name="Barford D."/>
        </authorList>
    </citation>
    <scope>INTERACTION WITH KSR2</scope>
    <scope>SUBUNIT</scope>
    <scope>CATALYTIC ACTIVITY</scope>
    <scope>FUNCTION</scope>
    <scope>MUTAGENESIS OF LYS-483</scope>
</reference>
<reference key="21">
    <citation type="journal article" date="2011" name="Sci. Signal.">
        <title>Protein arginine methyltransferase 5 regulates ERK1/2 signal transduction amplitude and cell fate through CRAF.</title>
        <authorList>
            <person name="Andreu-Perez P."/>
            <person name="Esteve-Puig R."/>
            <person name="de Torre-Minguela C."/>
            <person name="Lopez-Fauqued M."/>
            <person name="Bech-Serra J.J."/>
            <person name="Tenbaum S."/>
            <person name="Garcia-Trevijano E.R."/>
            <person name="Canals F."/>
            <person name="Merlino G."/>
            <person name="Avila M.A."/>
            <person name="Recio J.A."/>
        </authorList>
    </citation>
    <scope>INTERACTION WITH PRMT5</scope>
    <scope>METHYLATION AT ARG-671</scope>
    <scope>CHARACTERIZATION OF VARIANT CRC GLU-600</scope>
    <scope>MUTAGENESIS OF ARG-671</scope>
</reference>
<reference key="22">
    <citation type="journal article" date="2011" name="Sci. Signal.">
        <title>System-wide temporal characterization of the proteome and phosphoproteome of human embryonic stem cell differentiation.</title>
        <authorList>
            <person name="Rigbolt K.T."/>
            <person name="Prokhorova T.A."/>
            <person name="Akimov V."/>
            <person name="Henningsen J."/>
            <person name="Johansen P.T."/>
            <person name="Kratchmarova I."/>
            <person name="Kassem M."/>
            <person name="Mann M."/>
            <person name="Olsen J.V."/>
            <person name="Blagoev B."/>
        </authorList>
    </citation>
    <scope>PHOSPHORYLATION [LARGE SCALE ANALYSIS] AT SER-729</scope>
    <scope>IDENTIFICATION BY MASS SPECTROMETRY [LARGE SCALE ANALYSIS]</scope>
</reference>
<reference key="23">
    <citation type="journal article" date="2012" name="J. Biol. Chem.">
        <title>Ring finger protein 149 is an E3 ubiquitin ligase active on wild-type v-Raf murine sarcoma viral oncogene homolog B1 (BRAF).</title>
        <authorList>
            <person name="Hong S.W."/>
            <person name="Jin D.H."/>
            <person name="Shin J.S."/>
            <person name="Moon J.H."/>
            <person name="Na Y.S."/>
            <person name="Jung K.A."/>
            <person name="Kim S.M."/>
            <person name="Kim J.C."/>
            <person name="Kim K.P."/>
            <person name="Hong Y.S."/>
            <person name="Lee J.L."/>
            <person name="Choi E.K."/>
            <person name="Lee J.S."/>
            <person name="Kim T.W."/>
        </authorList>
    </citation>
    <scope>UBIQUITINATION BY RNF149</scope>
</reference>
<reference key="24">
    <citation type="journal article" date="2013" name="J. Proteome Res.">
        <title>Toward a comprehensive characterization of a human cancer cell phosphoproteome.</title>
        <authorList>
            <person name="Zhou H."/>
            <person name="Di Palma S."/>
            <person name="Preisinger C."/>
            <person name="Peng M."/>
            <person name="Polat A.N."/>
            <person name="Heck A.J."/>
            <person name="Mohammed S."/>
        </authorList>
    </citation>
    <scope>PHOSPHORYLATION [LARGE SCALE ANALYSIS] AT SER-151; SER-365; THR-401; SER-446 AND SER-729</scope>
    <scope>IDENTIFICATION BY MASS SPECTROMETRY [LARGE SCALE ANALYSIS]</scope>
    <source>
        <tissue>Cervix carcinoma</tissue>
        <tissue>Erythroleukemia</tissue>
    </source>
</reference>
<reference key="25">
    <citation type="journal article" date="2013" name="Sci. Rep.">
        <title>Lys63-linked polyubiquitination of BRAF at lysine 578 is required for BRAF-mediated signaling.</title>
        <authorList>
            <person name="An L."/>
            <person name="Jia W."/>
            <person name="Yu Y."/>
            <person name="Zou N."/>
            <person name="Liang L."/>
            <person name="Zhao Y."/>
            <person name="Fan Y."/>
            <person name="Cheng J."/>
            <person name="Shi Z."/>
            <person name="Xu G."/>
            <person name="Li G."/>
            <person name="Yang J."/>
            <person name="Zhang H."/>
        </authorList>
    </citation>
    <scope>UBIQUITINATION AT LYS-578</scope>
    <scope>MUTAGENESIS OF LYS-578</scope>
</reference>
<reference key="26">
    <citation type="journal article" date="2014" name="J. Proteomics">
        <title>An enzyme assisted RP-RPLC approach for in-depth analysis of human liver phosphoproteome.</title>
        <authorList>
            <person name="Bian Y."/>
            <person name="Song C."/>
            <person name="Cheng K."/>
            <person name="Dong M."/>
            <person name="Wang F."/>
            <person name="Huang J."/>
            <person name="Sun D."/>
            <person name="Wang L."/>
            <person name="Ye M."/>
            <person name="Zou H."/>
        </authorList>
    </citation>
    <scope>PHOSPHORYLATION [LARGE SCALE ANALYSIS] AT SER-151</scope>
    <scope>IDENTIFICATION BY MASS SPECTROMETRY [LARGE SCALE ANALYSIS]</scope>
    <source>
        <tissue>Liver</tissue>
    </source>
</reference>
<reference key="27">
    <citation type="journal article" date="2016" name="Nat. Commun.">
        <title>The FNIP co-chaperones decelerate the Hsp90 chaperone cycle and enhance drug binding.</title>
        <authorList>
            <person name="Woodford M.R."/>
            <person name="Dunn D.M."/>
            <person name="Blanden A.R."/>
            <person name="Capriotti D."/>
            <person name="Loiselle D."/>
            <person name="Prodromou C."/>
            <person name="Panaretou B."/>
            <person name="Hughes P.F."/>
            <person name="Smith A."/>
            <person name="Ackerman W."/>
            <person name="Haystead T.A."/>
            <person name="Loh S.N."/>
            <person name="Bourboulia D."/>
            <person name="Schmidt L.S."/>
            <person name="Marston Linehan W."/>
            <person name="Bratslavsky G."/>
            <person name="Mollapour M."/>
        </authorList>
    </citation>
    <scope>INTERACTION WITH FNIP1 AND FNIP2</scope>
</reference>
<reference key="28">
    <citation type="journal article" date="2019" name="Front. Physiol.">
        <title>A YWHAZ variant associated with cardiofaciocutaneous syndrome activates the RAF-ERK pathway.</title>
        <authorList>
            <person name="Popov I.K."/>
            <person name="Hiatt S.M."/>
            <person name="Whalen S."/>
            <person name="Keren B."/>
            <person name="Ruivenkamp C."/>
            <person name="van Haeringen A."/>
            <person name="Chen M.J."/>
            <person name="Cooper G.M."/>
            <person name="Korf B.R."/>
            <person name="Chang C."/>
        </authorList>
    </citation>
    <scope>INTERACTION WITH YWHAZ</scope>
</reference>
<reference key="29">
    <citation type="journal article" date="2022" name="Nat. Commun.">
        <title>BRAF activation by metabolic stress promotes glycolysis sensitizing NRASQ61-mutated melanomas to targeted therapy.</title>
        <authorList>
            <person name="McGrail K."/>
            <person name="Granado-Martinez P."/>
            <person name="Esteve-Puig R."/>
            <person name="Garcia-Ortega S."/>
            <person name="Ding Y."/>
            <person name="Sanchez-Redondo S."/>
            <person name="Ferrer B."/>
            <person name="Hernandez-Losa J."/>
            <person name="Canals F."/>
            <person name="Manzano A."/>
            <person name="Navarro-Sabate A."/>
            <person name="Bartrons R."/>
            <person name="Yanes O."/>
            <person name="Perez-Alea M."/>
            <person name="Munoz-Couselo E."/>
            <person name="Garcia-Patos V."/>
            <person name="Recio J.A."/>
        </authorList>
    </citation>
    <scope>FUNCTION</scope>
    <scope>SUBUNIT</scope>
</reference>
<reference key="30">
    <citation type="journal article" date="2022" name="Nature">
        <title>Structural basis for SHOC2 modulation of RAS signalling.</title>
        <authorList>
            <person name="Liau N.P.D."/>
            <person name="Johnson M.C."/>
            <person name="Izadi S."/>
            <person name="Gerosa L."/>
            <person name="Hammel M."/>
            <person name="Bruning J.M."/>
            <person name="Wendorff T.J."/>
            <person name="Phung W."/>
            <person name="Hymowitz S.G."/>
            <person name="Sudhamsu J."/>
        </authorList>
    </citation>
    <scope>DEPHOSPHORYLATION AT SER-365 BY SMP COMPLEX</scope>
</reference>
<reference key="31">
    <citation type="journal article" date="2022" name="Nature">
        <title>Structure of the MRAS-SHOC2-PP1C phosphatase complex.</title>
        <authorList>
            <person name="Hauseman Z.J."/>
            <person name="Fodor M."/>
            <person name="Dhembi A."/>
            <person name="Viscomi J."/>
            <person name="Egli D."/>
            <person name="Bleu M."/>
            <person name="Katz S."/>
            <person name="Park E."/>
            <person name="Jang D.M."/>
            <person name="Porter K.A."/>
            <person name="Meili F."/>
            <person name="Guo H."/>
            <person name="Kerr G."/>
            <person name="Molle S."/>
            <person name="Velez-Vega C."/>
            <person name="Beyer K.S."/>
            <person name="Galli G.G."/>
            <person name="Maira S.M."/>
            <person name="Stams T."/>
            <person name="Clark K."/>
            <person name="Eck M.J."/>
            <person name="Tordella L."/>
            <person name="Thoma C.R."/>
            <person name="King D.A."/>
        </authorList>
    </citation>
    <scope>DEPHOSPHORYLATION AT SER-365 BY SMP COMPLEX</scope>
</reference>
<reference key="32">
    <citation type="journal article" date="2008" name="Proc. Natl. Acad. Sci. U.S.A.">
        <title>Discovery of a selective inhibitor of oncogenic B-Raf kinase with potent antimelanoma activity.</title>
        <authorList>
            <person name="Tsai J."/>
            <person name="Lee J.T."/>
            <person name="Wang W."/>
            <person name="Zhang J."/>
            <person name="Cho H."/>
            <person name="Mamo S."/>
            <person name="Bremer R."/>
            <person name="Gillette S."/>
            <person name="Kong J."/>
            <person name="Haass N.K."/>
            <person name="Sproesser K."/>
            <person name="Li L."/>
            <person name="Smalley K.S."/>
            <person name="Fong D."/>
            <person name="Zhu Y.L."/>
            <person name="Marimuthu A."/>
            <person name="Nguyen H."/>
            <person name="Lam B."/>
            <person name="Liu J."/>
            <person name="Cheung I."/>
            <person name="Rice J."/>
            <person name="Suzuki Y."/>
            <person name="Luu C."/>
            <person name="Settachatgul C."/>
            <person name="Shellooe R."/>
            <person name="Cantwell J."/>
            <person name="Kim S.H."/>
            <person name="Schlessinger J."/>
            <person name="Zhang K.Y."/>
            <person name="West B.L."/>
            <person name="Powell B."/>
            <person name="Habets G."/>
            <person name="Zhang C."/>
            <person name="Ibrahim P.N."/>
            <person name="Hirth P."/>
            <person name="Artis D.R."/>
            <person name="Herlyn M."/>
            <person name="Bollag G."/>
        </authorList>
    </citation>
    <scope>X-RAY CRYSTALLOGRAPHY (2.57 ANGSTROMS) OF 444-719 IN COMPLEX WITH INHIBITOR</scope>
</reference>
<reference evidence="39 40" key="33">
    <citation type="journal article" date="2018" name="Nature">
        <title>MEK drives BRAF activation through allosteric control of KSR proteins.</title>
        <authorList>
            <person name="Lavoie H."/>
            <person name="Sahmi M."/>
            <person name="Maisonneuve P."/>
            <person name="Marullo S.A."/>
            <person name="Thevakumaran N."/>
            <person name="Jin T."/>
            <person name="Kurinov I."/>
            <person name="Sicheri F."/>
            <person name="Therrien M."/>
        </authorList>
    </citation>
    <scope>X-RAY CRYSTALLOGRAPHY (1.75 ANGSTROMS) OF 36-110</scope>
    <scope>FUNCTION</scope>
    <scope>CATALYTIC ACTIVITY</scope>
    <scope>ACTIVITY REGULATION</scope>
    <scope>INTERACTION WITH KSR1; KSR2; MAP2K1 AND MAP2K2</scope>
    <scope>MUTAGENESIS OF MET-53; LYS-88; ARG-509 AND ILE-666</scope>
</reference>
<reference key="34">
    <citation type="journal article" date="2002" name="Cancer Res.">
        <title>Missense mutations of the BRAF gene in human lung adenocarcinoma.</title>
        <authorList>
            <person name="Naoki K."/>
            <person name="Chen T.-H."/>
            <person name="Richards W.G."/>
            <person name="Sugarbaker D.J."/>
            <person name="Meyerson M."/>
        </authorList>
    </citation>
    <scope>VARIANTS LNCR VAL-466 AND ARG-597</scope>
</reference>
<reference key="35">
    <citation type="journal article" date="2002" name="Nature">
        <title>Mutations of the BRAF gene in human cancer.</title>
        <authorList>
            <person name="Davies H."/>
            <person name="Bignell G.R."/>
            <person name="Cox C."/>
            <person name="Stephens P."/>
            <person name="Edkins S."/>
            <person name="Clegg S."/>
            <person name="Teague J."/>
            <person name="Woffendin H."/>
            <person name="Garnett M.J."/>
            <person name="Bottomley W."/>
            <person name="Davis N."/>
            <person name="Dicks E."/>
            <person name="Ewing R."/>
            <person name="Floyd Y."/>
            <person name="Gray K."/>
            <person name="Hall S."/>
            <person name="Hawes R."/>
            <person name="Hughes J."/>
            <person name="Kosmidou V."/>
            <person name="Menzies A."/>
            <person name="Mould C."/>
            <person name="Parker A."/>
            <person name="Stevens C."/>
            <person name="Watt S."/>
            <person name="Hooper S."/>
            <person name="Wilson R."/>
            <person name="Jayatilake H."/>
            <person name="Gusterson B.A."/>
            <person name="Cooper C."/>
            <person name="Shipley J."/>
            <person name="Hargrave D."/>
            <person name="Pritchard-Jones K."/>
            <person name="Maitland N."/>
            <person name="Chenevix-Trench G."/>
            <person name="Riggins G.J."/>
            <person name="Bigner D.D."/>
            <person name="Palmieri G."/>
            <person name="Cossu A."/>
            <person name="Flanagan A."/>
            <person name="Nicholson A."/>
            <person name="Ho J.W.C."/>
            <person name="Leung S.Y."/>
            <person name="Yuen S.T."/>
            <person name="Weber B.L."/>
            <person name="Seigler H.F."/>
            <person name="Darrow T.L."/>
            <person name="Paterson H."/>
            <person name="Marais R."/>
            <person name="Marshall C.J."/>
            <person name="Wooster R."/>
            <person name="Stratton M.R."/>
            <person name="Futreal P.A."/>
        </authorList>
    </citation>
    <scope>VARIANTS CANCER GLU-464; VAL-464; ALA-466; GLU-466; VAL-466; ALA-469; GLU-469; LYS-586; LEU-595; ARG-596; ARG-597; VAL-597; GLU-600 AND ASP-600</scope>
    <scope>CHARACTERIZATION OF VARIANTS CANCER VAL-464; ALA-469; VAL-597 AND GLU-600</scope>
</reference>
<reference key="36">
    <citation type="journal article" date="2002" name="Nature">
        <title>Tumorigenesis: RAF/RAS oncogenes and mismatch-repair status.</title>
        <authorList>
            <person name="Rajagopalan H."/>
            <person name="Bardelli A."/>
            <person name="Lengauer C."/>
            <person name="Kinzler K.W."/>
            <person name="Vogelstein B."/>
            <person name="Velculescu V.E."/>
        </authorList>
    </citation>
    <scope>VARIANTS CRC ILE-462; SER-463; GLU-464; GLU-600 AND GLU-601</scope>
</reference>
<reference key="37">
    <citation type="journal article" date="2003" name="Br. J. Cancer">
        <title>BRAF mutations in non-Hodgkin's lymphoma.</title>
        <authorList>
            <person name="Lee J.W."/>
            <person name="Yoo N.J."/>
            <person name="Soung Ark W.S."/>
            <person name="Kim S.Y."/>
            <person name="Lee J.H."/>
            <person name="Park J.Y."/>
            <person name="Cho Y.G."/>
            <person name="Kim C.J."/>
            <person name="Ko Y.H."/>
            <person name="Kim S.H."/>
            <person name="Nam S.W."/>
            <person name="Lee J.Y."/>
            <person name="Lee S.H."/>
        </authorList>
    </citation>
    <scope>VARIANTS NHL ALA-469; ARG-469 AND GLY-594</scope>
</reference>
<reference key="38">
    <citation type="journal article" date="2003" name="Cancer Res.">
        <title>Suppression of BRAF(V599E) in human melanoma abrogates transformation.</title>
        <authorList>
            <person name="Hingorani S.R."/>
            <person name="Jacobetz M.A."/>
            <person name="Robertson G.P."/>
            <person name="Herlyn M."/>
            <person name="Tuveson D.A."/>
        </authorList>
    </citation>
    <scope>CHARACTERIZATION OF VARIANT MELANOMA GLU-600</scope>
</reference>
<reference key="39">
    <citation type="journal article" date="2006" name="Nat. Genet.">
        <title>Germline KRAS and BRAF mutations in cardio-facio-cutaneous syndrome.</title>
        <authorList>
            <person name="Niihori T."/>
            <person name="Aoki Y."/>
            <person name="Narumi Y."/>
            <person name="Neri G."/>
            <person name="Cave H."/>
            <person name="Verloes A."/>
            <person name="Okamoto N."/>
            <person name="Hennekam R.C.M."/>
            <person name="Gillessen-Kaesbach G."/>
            <person name="Wieczorek D."/>
            <person name="Kavamura M.I."/>
            <person name="Kurosawa K."/>
            <person name="Ohashi H."/>
            <person name="Wilson L."/>
            <person name="Heron D."/>
            <person name="Bonneau D."/>
            <person name="Corona G."/>
            <person name="Kaname T."/>
            <person name="Naritomi K."/>
            <person name="Baumann C."/>
            <person name="Matsumoto N."/>
            <person name="Kato K."/>
            <person name="Kure S."/>
            <person name="Matsubara Y."/>
        </authorList>
    </citation>
    <scope>VARIANTS CFC1 PRO-246; ARG-257; GLU-469; PHE-485; GLU-499; LYS-501; GLY-501 AND ASP-581</scope>
</reference>
<reference key="40">
    <citation type="journal article" date="2006" name="Science">
        <title>The consensus coding sequences of human breast and colorectal cancers.</title>
        <authorList>
            <person name="Sjoeblom T."/>
            <person name="Jones S."/>
            <person name="Wood L.D."/>
            <person name="Parsons D.W."/>
            <person name="Lin J."/>
            <person name="Barber T.D."/>
            <person name="Mandelker D."/>
            <person name="Leary R.J."/>
            <person name="Ptak J."/>
            <person name="Silliman N."/>
            <person name="Szabo S."/>
            <person name="Buckhaults P."/>
            <person name="Farrell C."/>
            <person name="Meeh P."/>
            <person name="Markowitz S.D."/>
            <person name="Willis J."/>
            <person name="Dawson D."/>
            <person name="Willson J.K.V."/>
            <person name="Gazdar A.F."/>
            <person name="Hartigan J."/>
            <person name="Wu L."/>
            <person name="Liu C."/>
            <person name="Parmigiani G."/>
            <person name="Park B.H."/>
            <person name="Bachman K.E."/>
            <person name="Papadopoulos N."/>
            <person name="Vogelstein B."/>
            <person name="Kinzler K.W."/>
            <person name="Velculescu V.E."/>
        </authorList>
    </citation>
    <scope>VARIANT [LARGE SCALE ANALYSIS] GLU-600</scope>
</reference>
<reference key="41">
    <citation type="journal article" date="2006" name="Science">
        <title>Germline mutations in genes within the MAPK pathway cause cardio-facio-cutaneous syndrome.</title>
        <authorList>
            <person name="Rodriguez-Viciana P."/>
            <person name="Tetsu O."/>
            <person name="Tidyman W.E."/>
            <person name="Estep A.L."/>
            <person name="Conger B.A."/>
            <person name="Cruz M.S."/>
            <person name="McCormick F."/>
            <person name="Rauen K.A."/>
        </authorList>
    </citation>
    <scope>VARIANTS CFC1 ARG-257; ALA-467; SER-468; GLU-469; PHE-485; GLU-499; LYS-501; GLY-501; ASP-581; LEU-595 AND VAL-596</scope>
</reference>
<reference key="42">
    <citation type="journal article" date="2007" name="Nature">
        <title>Patterns of somatic mutation in human cancer genomes.</title>
        <authorList>
            <person name="Greenman C."/>
            <person name="Stephens P."/>
            <person name="Smith R."/>
            <person name="Dalgliesh G.L."/>
            <person name="Hunter C."/>
            <person name="Bignell G."/>
            <person name="Davies H."/>
            <person name="Teague J."/>
            <person name="Butler A."/>
            <person name="Stevens C."/>
            <person name="Edkins S."/>
            <person name="O'Meara S."/>
            <person name="Vastrik I."/>
            <person name="Schmidt E.E."/>
            <person name="Avis T."/>
            <person name="Barthorpe S."/>
            <person name="Bhamra G."/>
            <person name="Buck G."/>
            <person name="Choudhury B."/>
            <person name="Clements J."/>
            <person name="Cole J."/>
            <person name="Dicks E."/>
            <person name="Forbes S."/>
            <person name="Gray K."/>
            <person name="Halliday K."/>
            <person name="Harrison R."/>
            <person name="Hills K."/>
            <person name="Hinton J."/>
            <person name="Jenkinson A."/>
            <person name="Jones D."/>
            <person name="Menzies A."/>
            <person name="Mironenko T."/>
            <person name="Perry J."/>
            <person name="Raine K."/>
            <person name="Richardson D."/>
            <person name="Shepherd R."/>
            <person name="Small A."/>
            <person name="Tofts C."/>
            <person name="Varian J."/>
            <person name="Webb T."/>
            <person name="West S."/>
            <person name="Widaa S."/>
            <person name="Yates A."/>
            <person name="Cahill D.P."/>
            <person name="Louis D.N."/>
            <person name="Goldstraw P."/>
            <person name="Nicholson A.G."/>
            <person name="Brasseur F."/>
            <person name="Looijenga L."/>
            <person name="Weber B.L."/>
            <person name="Chiew Y.-E."/>
            <person name="DeFazio A."/>
            <person name="Greaves M.F."/>
            <person name="Green A.R."/>
            <person name="Campbell P."/>
            <person name="Birney E."/>
            <person name="Easton D.F."/>
            <person name="Chenevix-Trench G."/>
            <person name="Tan M.-H."/>
            <person name="Khoo S.K."/>
            <person name="Teh B.T."/>
            <person name="Yuen S.T."/>
            <person name="Leung S.Y."/>
            <person name="Wooster R."/>
            <person name="Futreal P.A."/>
            <person name="Stratton M.R."/>
        </authorList>
    </citation>
    <scope>VARIANTS [LARGE SCALE ANALYSIS] SER-301; ALA-469; VAL-469; SER-581; ARG-596; ARG-597; VAL-597 AND GLU-600</scope>
</reference>
<reference key="43">
    <citation type="journal article" date="2008" name="Clin. Genet.">
        <title>Mutation and phenotypic spectrum in patients with cardio-facio-cutaneous and Costello syndrome.</title>
        <authorList>
            <person name="Schulz A.L."/>
            <person name="Albrecht B."/>
            <person name="Arici C."/>
            <person name="van der Burgt I."/>
            <person name="Buske A."/>
            <person name="Gillessen-Kaesbach G."/>
            <person name="Heller R."/>
            <person name="Horn D."/>
            <person name="Hubner C.A."/>
            <person name="Korenke G.C."/>
            <person name="Konig R."/>
            <person name="Kress W."/>
            <person name="Kruger G."/>
            <person name="Meinecke P."/>
            <person name="Mucke J."/>
            <person name="Plecko B."/>
            <person name="Rossier E."/>
            <person name="Schinzel A."/>
            <person name="Schulze A."/>
            <person name="Seemanova E."/>
            <person name="Seidel H."/>
            <person name="Spranger S."/>
            <person name="Tuysuz B."/>
            <person name="Uhrig S."/>
            <person name="Wieczorek D."/>
            <person name="Kutsche K."/>
            <person name="Zenker M."/>
        </authorList>
    </citation>
    <scope>VARIANTS CFC1 PRO-241; PRO-244; PRO-246; ARG-257; LYS-262; SER-468; GLU-469; GLU-499; ASN-499; ASP-580; ASP-581 AND LEU-595</scope>
</reference>
<reference key="44">
    <citation type="journal article" date="2009" name="Hum. Mutat.">
        <title>Germline BRAF mutations in Noonan, LEOPARD, and cardiofaciocutaneous syndromes: molecular diversity and associated phenotypic spectrum.</title>
        <authorList>
            <person name="Sarkozy A."/>
            <person name="Carta C."/>
            <person name="Moretti S."/>
            <person name="Zampino G."/>
            <person name="Digilio M.C."/>
            <person name="Pantaleoni F."/>
            <person name="Scioletti A.P."/>
            <person name="Esposito G."/>
            <person name="Cordeddu V."/>
            <person name="Lepri F."/>
            <person name="Petrangeli V."/>
            <person name="Dentici M.L."/>
            <person name="Mancini G.M."/>
            <person name="Selicorni A."/>
            <person name="Rossi C."/>
            <person name="Mazzanti L."/>
            <person name="Marino B."/>
            <person name="Ferrero G.B."/>
            <person name="Silengo M.C."/>
            <person name="Memo L."/>
            <person name="Stanzial F."/>
            <person name="Faravelli F."/>
            <person name="Stuppia L."/>
            <person name="Puxeddu E."/>
            <person name="Gelb B.D."/>
            <person name="Dallapiccola B."/>
            <person name="Tartaglia M."/>
        </authorList>
    </citation>
    <scope>VARIANT LPRD3 PRO-241</scope>
    <scope>VARIANTS NS7 ARG-241; MET-241; CYS-531 AND VAL-597</scope>
    <scope>VARIANTS CFC1 PHE-245; PRO-246; ARG-257; LYS-275; GLU-469; PHE-485; ASN-499; LYS-501; PRO-525; LEU-595; ARG-599; GLN-601; GLU-638 AND ARG-709</scope>
</reference>
<reference key="45">
    <citation type="journal article" date="2013" name="Nat. Genet.">
        <title>Germline mutations affecting the proofreading domains of POLE and POLD1 predispose to colorectal adenomas and carcinomas.</title>
        <authorList>
            <consortium name="CORGI Consortium"/>
            <consortium name="WGS500 Consortium"/>
            <person name="Palles C."/>
            <person name="Cazier J.B."/>
            <person name="Howarth K.M."/>
            <person name="Domingo E."/>
            <person name="Jones A.M."/>
            <person name="Broderick P."/>
            <person name="Kemp Z."/>
            <person name="Spain S.L."/>
            <person name="Guarino Almeida E."/>
            <person name="Salguero I."/>
            <person name="Sherborne A."/>
            <person name="Chubb D."/>
            <person name="Carvajal-Carmona L.G."/>
            <person name="Ma Y."/>
            <person name="Kaur K."/>
            <person name="Dobbins S."/>
            <person name="Barclay E."/>
            <person name="Gorman M."/>
            <person name="Martin L."/>
            <person name="Kovac M.B."/>
            <person name="Humphray S."/>
            <person name="Lucassen A."/>
            <person name="Holmes C.C."/>
            <person name="Bentley D."/>
            <person name="Donnelly P."/>
            <person name="Taylor J."/>
            <person name="Petridis C."/>
            <person name="Roylance R."/>
            <person name="Sawyer E.J."/>
            <person name="Kerr D.J."/>
            <person name="Clark S."/>
            <person name="Grimes J."/>
            <person name="Kearsey S.E."/>
            <person name="Thomas H.J."/>
            <person name="McVean G."/>
            <person name="Houlston R.S."/>
            <person name="Tomlinson I."/>
        </authorList>
    </citation>
    <scope>VARIANT CRC GLU-600</scope>
</reference>
<reference key="46">
    <citation type="journal article" date="2014" name="Front. Oncol.">
        <title>Evidence that GRIN2A mutations in melanoma correlate with decreased survival.</title>
        <authorList>
            <person name="D'mello S.A."/>
            <person name="Flanagan J.U."/>
            <person name="Green T.N."/>
            <person name="Leung E.Y."/>
            <person name="Askarian-Amiri M.E."/>
            <person name="Joseph W.R."/>
            <person name="McCrystal M.R."/>
            <person name="Isaacs R.J."/>
            <person name="Shaw J.H."/>
            <person name="Furneaux C.E."/>
            <person name="During M.J."/>
            <person name="Finlay G.J."/>
            <person name="Baguley B.C."/>
            <person name="Kalev-Zylinska M.L."/>
        </authorList>
    </citation>
    <scope>VARIANT CRC GLU-600</scope>
</reference>
<dbReference type="EC" id="2.7.11.1" evidence="25 32"/>
<dbReference type="EMBL" id="M95712">
    <property type="protein sequence ID" value="AAA35609.2"/>
    <property type="molecule type" value="mRNA"/>
</dbReference>
<dbReference type="EMBL" id="AC006344">
    <property type="protein sequence ID" value="AAD43193.1"/>
    <property type="status" value="ALT_SEQ"/>
    <property type="molecule type" value="Genomic_DNA"/>
</dbReference>
<dbReference type="EMBL" id="EU600171">
    <property type="protein sequence ID" value="ACD11489.1"/>
    <property type="molecule type" value="Genomic_DNA"/>
</dbReference>
<dbReference type="EMBL" id="AC006347">
    <property type="protein sequence ID" value="AAD15551.1"/>
    <property type="molecule type" value="Genomic_DNA"/>
</dbReference>
<dbReference type="EMBL" id="CH236950">
    <property type="protein sequence ID" value="EAL24023.1"/>
    <property type="molecule type" value="Genomic_DNA"/>
</dbReference>
<dbReference type="EMBL" id="BC101757">
    <property type="protein sequence ID" value="AAI01758.1"/>
    <property type="molecule type" value="mRNA"/>
</dbReference>
<dbReference type="EMBL" id="BC112079">
    <property type="protein sequence ID" value="AAI12080.1"/>
    <property type="molecule type" value="mRNA"/>
</dbReference>
<dbReference type="EMBL" id="X65187">
    <property type="protein sequence ID" value="CAA46301.1"/>
    <property type="molecule type" value="Genomic_DNA"/>
</dbReference>
<dbReference type="EMBL" id="M21001">
    <property type="protein sequence ID" value="AAA96495.1"/>
    <property type="molecule type" value="mRNA"/>
</dbReference>
<dbReference type="EMBL" id="AM989472">
    <property type="protein sequence ID" value="CAQ43111.1"/>
    <property type="status" value="ALT_INIT"/>
    <property type="molecule type" value="mRNA"/>
</dbReference>
<dbReference type="EMBL" id="AM989473">
    <property type="protein sequence ID" value="CAQ43112.1"/>
    <property type="status" value="ALT_INIT"/>
    <property type="molecule type" value="mRNA"/>
</dbReference>
<dbReference type="EMBL" id="AM989474">
    <property type="protein sequence ID" value="CAQ43113.1"/>
    <property type="status" value="ALT_INIT"/>
    <property type="molecule type" value="mRNA"/>
</dbReference>
<dbReference type="EMBL" id="AM989475">
    <property type="protein sequence ID" value="CAQ43114.1"/>
    <property type="status" value="ALT_INIT"/>
    <property type="molecule type" value="mRNA"/>
</dbReference>
<dbReference type="EMBL" id="AM989476">
    <property type="protein sequence ID" value="CAQ43115.1"/>
    <property type="status" value="ALT_INIT"/>
    <property type="molecule type" value="mRNA"/>
</dbReference>
<dbReference type="EMBL" id="AM989477">
    <property type="protein sequence ID" value="CAQ43116.1"/>
    <property type="status" value="ALT_INIT"/>
    <property type="molecule type" value="mRNA"/>
</dbReference>
<dbReference type="CCDS" id="CCDS5863.1"/>
<dbReference type="PIR" id="A57977">
    <property type="entry name" value="TVHUBF"/>
</dbReference>
<dbReference type="RefSeq" id="NP_004324.2">
    <property type="nucleotide sequence ID" value="NM_004333.4"/>
</dbReference>
<dbReference type="PDB" id="1UWH">
    <property type="method" value="X-ray"/>
    <property type="resolution" value="2.95 A"/>
    <property type="chains" value="A/B=448-723"/>
</dbReference>
<dbReference type="PDB" id="1UWJ">
    <property type="method" value="X-ray"/>
    <property type="resolution" value="3.50 A"/>
    <property type="chains" value="A/B=448-723"/>
</dbReference>
<dbReference type="PDB" id="2FB8">
    <property type="method" value="X-ray"/>
    <property type="resolution" value="2.90 A"/>
    <property type="chains" value="A/B=445-723"/>
</dbReference>
<dbReference type="PDB" id="2L05">
    <property type="method" value="NMR"/>
    <property type="chains" value="A=149-232"/>
</dbReference>
<dbReference type="PDB" id="3C4C">
    <property type="method" value="X-ray"/>
    <property type="resolution" value="2.57 A"/>
    <property type="chains" value="A/B=444-721"/>
</dbReference>
<dbReference type="PDB" id="3D4Q">
    <property type="method" value="X-ray"/>
    <property type="resolution" value="2.80 A"/>
    <property type="chains" value="A/B=433-726"/>
</dbReference>
<dbReference type="PDB" id="3IDP">
    <property type="method" value="X-ray"/>
    <property type="resolution" value="2.70 A"/>
    <property type="chains" value="A/B=434-727"/>
</dbReference>
<dbReference type="PDB" id="3II5">
    <property type="method" value="X-ray"/>
    <property type="resolution" value="2.79 A"/>
    <property type="chains" value="A/B=432-726"/>
</dbReference>
<dbReference type="PDB" id="3NY5">
    <property type="method" value="X-ray"/>
    <property type="resolution" value="1.99 A"/>
    <property type="chains" value="A/B/C/D=153-237"/>
</dbReference>
<dbReference type="PDB" id="3OG7">
    <property type="method" value="X-ray"/>
    <property type="resolution" value="2.45 A"/>
    <property type="chains" value="A/B=448-720"/>
</dbReference>
<dbReference type="PDB" id="3PPJ">
    <property type="method" value="X-ray"/>
    <property type="resolution" value="3.70 A"/>
    <property type="chains" value="A/B=432-726"/>
</dbReference>
<dbReference type="PDB" id="3PPK">
    <property type="method" value="X-ray"/>
    <property type="resolution" value="3.00 A"/>
    <property type="chains" value="A/B=432-726"/>
</dbReference>
<dbReference type="PDB" id="3PRF">
    <property type="method" value="X-ray"/>
    <property type="resolution" value="2.90 A"/>
    <property type="chains" value="A/B=432-726"/>
</dbReference>
<dbReference type="PDB" id="3PRI">
    <property type="method" value="X-ray"/>
    <property type="resolution" value="3.50 A"/>
    <property type="chains" value="A/B=432-726"/>
</dbReference>
<dbReference type="PDB" id="3PSB">
    <property type="method" value="X-ray"/>
    <property type="resolution" value="3.40 A"/>
    <property type="chains" value="A/B=433-726"/>
</dbReference>
<dbReference type="PDB" id="3PSD">
    <property type="method" value="X-ray"/>
    <property type="resolution" value="3.60 A"/>
    <property type="chains" value="A/B=433-726"/>
</dbReference>
<dbReference type="PDB" id="3Q4C">
    <property type="method" value="X-ray"/>
    <property type="resolution" value="3.20 A"/>
    <property type="chains" value="A/B=432-726"/>
</dbReference>
<dbReference type="PDB" id="3Q96">
    <property type="method" value="X-ray"/>
    <property type="resolution" value="3.10 A"/>
    <property type="chains" value="A/B=446-727"/>
</dbReference>
<dbReference type="PDB" id="3SKC">
    <property type="method" value="X-ray"/>
    <property type="resolution" value="3.20 A"/>
    <property type="chains" value="A/B=432-726"/>
</dbReference>
<dbReference type="PDB" id="3TV4">
    <property type="method" value="X-ray"/>
    <property type="resolution" value="3.40 A"/>
    <property type="chains" value="A/B=432-726"/>
</dbReference>
<dbReference type="PDB" id="3TV6">
    <property type="method" value="X-ray"/>
    <property type="resolution" value="3.30 A"/>
    <property type="chains" value="A/B=432-726"/>
</dbReference>
<dbReference type="PDB" id="4CQE">
    <property type="method" value="X-ray"/>
    <property type="resolution" value="2.30 A"/>
    <property type="chains" value="A/B=448-723"/>
</dbReference>
<dbReference type="PDB" id="4DBN">
    <property type="method" value="X-ray"/>
    <property type="resolution" value="3.15 A"/>
    <property type="chains" value="A/B=445-726"/>
</dbReference>
<dbReference type="PDB" id="4E26">
    <property type="method" value="X-ray"/>
    <property type="resolution" value="2.55 A"/>
    <property type="chains" value="A/B=432-726"/>
</dbReference>
<dbReference type="PDB" id="4E4X">
    <property type="method" value="X-ray"/>
    <property type="resolution" value="3.60 A"/>
    <property type="chains" value="A/B=432-726"/>
</dbReference>
<dbReference type="PDB" id="4EHE">
    <property type="method" value="X-ray"/>
    <property type="resolution" value="3.30 A"/>
    <property type="chains" value="A/B=432-726"/>
</dbReference>
<dbReference type="PDB" id="4EHG">
    <property type="method" value="X-ray"/>
    <property type="resolution" value="3.50 A"/>
    <property type="chains" value="A/B=432-726"/>
</dbReference>
<dbReference type="PDB" id="4FC0">
    <property type="method" value="X-ray"/>
    <property type="resolution" value="2.95 A"/>
    <property type="chains" value="A/B=445-726"/>
</dbReference>
<dbReference type="PDB" id="4FK3">
    <property type="method" value="X-ray"/>
    <property type="resolution" value="2.65 A"/>
    <property type="chains" value="A/B=444-723"/>
</dbReference>
<dbReference type="PDB" id="4G9C">
    <property type="method" value="X-ray"/>
    <property type="resolution" value="3.50 A"/>
    <property type="chains" value="A/B=432-726"/>
</dbReference>
<dbReference type="PDB" id="4G9R">
    <property type="method" value="X-ray"/>
    <property type="resolution" value="3.20 A"/>
    <property type="chains" value="A/B=432-726"/>
</dbReference>
<dbReference type="PDB" id="4H58">
    <property type="method" value="X-ray"/>
    <property type="resolution" value="3.10 A"/>
    <property type="chains" value="A/B/C=448-722"/>
</dbReference>
<dbReference type="PDB" id="4JVG">
    <property type="method" value="X-ray"/>
    <property type="resolution" value="3.09 A"/>
    <property type="chains" value="A/B/C/D=444-723"/>
</dbReference>
<dbReference type="PDB" id="4KSP">
    <property type="method" value="X-ray"/>
    <property type="resolution" value="2.93 A"/>
    <property type="chains" value="A/B=445-726"/>
</dbReference>
<dbReference type="PDB" id="4KSQ">
    <property type="method" value="X-ray"/>
    <property type="resolution" value="3.30 A"/>
    <property type="chains" value="A/B=445-726"/>
</dbReference>
<dbReference type="PDB" id="4MBJ">
    <property type="method" value="X-ray"/>
    <property type="resolution" value="3.60 A"/>
    <property type="chains" value="A/B=432-723"/>
</dbReference>
<dbReference type="PDB" id="4MNE">
    <property type="method" value="X-ray"/>
    <property type="resolution" value="2.85 A"/>
    <property type="chains" value="B/C/F/G=432-726"/>
</dbReference>
<dbReference type="PDB" id="4MNF">
    <property type="method" value="X-ray"/>
    <property type="resolution" value="2.80 A"/>
    <property type="chains" value="A/B=432-736"/>
</dbReference>
<dbReference type="PDB" id="4PP7">
    <property type="method" value="X-ray"/>
    <property type="resolution" value="3.40 A"/>
    <property type="chains" value="A/B=432-726"/>
</dbReference>
<dbReference type="PDB" id="4R5Y">
    <property type="method" value="X-ray"/>
    <property type="resolution" value="3.50 A"/>
    <property type="chains" value="A/B=444-723"/>
</dbReference>
<dbReference type="PDB" id="4RZV">
    <property type="method" value="X-ray"/>
    <property type="resolution" value="2.99 A"/>
    <property type="chains" value="A/B=443-723"/>
</dbReference>
<dbReference type="PDB" id="4RZW">
    <property type="method" value="X-ray"/>
    <property type="resolution" value="3.49 A"/>
    <property type="chains" value="A/B=443-723"/>
</dbReference>
<dbReference type="PDB" id="4WO5">
    <property type="method" value="X-ray"/>
    <property type="resolution" value="2.83 A"/>
    <property type="chains" value="A/B=444-723"/>
</dbReference>
<dbReference type="PDB" id="4XV1">
    <property type="method" value="X-ray"/>
    <property type="resolution" value="2.47 A"/>
    <property type="chains" value="A/B=444-705"/>
</dbReference>
<dbReference type="PDB" id="4XV2">
    <property type="method" value="X-ray"/>
    <property type="resolution" value="2.50 A"/>
    <property type="chains" value="A/B=444-705"/>
</dbReference>
<dbReference type="PDB" id="4XV3">
    <property type="method" value="X-ray"/>
    <property type="resolution" value="2.80 A"/>
    <property type="chains" value="A/B=444-705"/>
</dbReference>
<dbReference type="PDB" id="4XV9">
    <property type="method" value="X-ray"/>
    <property type="resolution" value="2.00 A"/>
    <property type="chains" value="A=442-705"/>
</dbReference>
<dbReference type="PDB" id="4YHT">
    <property type="method" value="X-ray"/>
    <property type="resolution" value="3.05 A"/>
    <property type="chains" value="A/B=449-720"/>
</dbReference>
<dbReference type="PDB" id="5C9C">
    <property type="method" value="X-ray"/>
    <property type="resolution" value="2.70 A"/>
    <property type="chains" value="A/B=432-726"/>
</dbReference>
<dbReference type="PDB" id="5CSW">
    <property type="method" value="X-ray"/>
    <property type="resolution" value="2.66 A"/>
    <property type="chains" value="A/B=442-721"/>
</dbReference>
<dbReference type="PDB" id="5CSX">
    <property type="method" value="X-ray"/>
    <property type="resolution" value="2.51 A"/>
    <property type="chains" value="A=442-721"/>
</dbReference>
<dbReference type="PDB" id="5CT7">
    <property type="method" value="X-ray"/>
    <property type="resolution" value="3.17 A"/>
    <property type="chains" value="A/B=445-723"/>
</dbReference>
<dbReference type="PDB" id="5FD2">
    <property type="method" value="X-ray"/>
    <property type="resolution" value="2.89 A"/>
    <property type="chains" value="A/B=433-726"/>
</dbReference>
<dbReference type="PDB" id="5HI2">
    <property type="method" value="X-ray"/>
    <property type="resolution" value="2.51 A"/>
    <property type="chains" value="A=444-737"/>
</dbReference>
<dbReference type="PDB" id="5HID">
    <property type="method" value="X-ray"/>
    <property type="resolution" value="2.50 A"/>
    <property type="chains" value="A/B=444-737"/>
</dbReference>
<dbReference type="PDB" id="5HIE">
    <property type="method" value="X-ray"/>
    <property type="resolution" value="3.00 A"/>
    <property type="chains" value="A/B/C/D=432-726"/>
</dbReference>
<dbReference type="PDB" id="5ITA">
    <property type="method" value="X-ray"/>
    <property type="resolution" value="1.95 A"/>
    <property type="chains" value="A/B=448-723"/>
</dbReference>
<dbReference type="PDB" id="5J17">
    <property type="method" value="NMR"/>
    <property type="chains" value="A=151-232"/>
</dbReference>
<dbReference type="PDB" id="5J18">
    <property type="method" value="NMR"/>
    <property type="chains" value="A=151-232"/>
</dbReference>
<dbReference type="PDB" id="5J2R">
    <property type="method" value="NMR"/>
    <property type="chains" value="A=151-232"/>
</dbReference>
<dbReference type="PDB" id="5JRQ">
    <property type="method" value="X-ray"/>
    <property type="resolution" value="2.29 A"/>
    <property type="chains" value="A/B=448-723"/>
</dbReference>
<dbReference type="PDB" id="5JSM">
    <property type="method" value="X-ray"/>
    <property type="resolution" value="2.19 A"/>
    <property type="chains" value="A/B/C/D=448-723"/>
</dbReference>
<dbReference type="PDB" id="5JT2">
    <property type="method" value="X-ray"/>
    <property type="resolution" value="2.70 A"/>
    <property type="chains" value="A/B/C/D=448-723"/>
</dbReference>
<dbReference type="PDB" id="5VAL">
    <property type="method" value="X-ray"/>
    <property type="resolution" value="2.26 A"/>
    <property type="chains" value="A/B=445-723"/>
</dbReference>
<dbReference type="PDB" id="5VAM">
    <property type="method" value="X-ray"/>
    <property type="resolution" value="2.10 A"/>
    <property type="chains" value="A/B=445-723"/>
</dbReference>
<dbReference type="PDB" id="5VR3">
    <property type="method" value="X-ray"/>
    <property type="resolution" value="2.10 A"/>
    <property type="chains" value="A=36-114"/>
</dbReference>
<dbReference type="PDB" id="5VYK">
    <property type="method" value="X-ray"/>
    <property type="resolution" value="1.75 A"/>
    <property type="chains" value="A/C=36-110"/>
</dbReference>
<dbReference type="PDB" id="6B8U">
    <property type="method" value="X-ray"/>
    <property type="resolution" value="2.68 A"/>
    <property type="chains" value="A/B=445-723"/>
</dbReference>
<dbReference type="PDB" id="6CAD">
    <property type="method" value="X-ray"/>
    <property type="resolution" value="2.55 A"/>
    <property type="chains" value="A/B=444-723"/>
</dbReference>
<dbReference type="PDB" id="6N0P">
    <property type="method" value="X-ray"/>
    <property type="resolution" value="2.37 A"/>
    <property type="chains" value="A/B=449-721"/>
</dbReference>
<dbReference type="PDB" id="6N0Q">
    <property type="method" value="X-ray"/>
    <property type="resolution" value="2.04 A"/>
    <property type="chains" value="A/B=445-723"/>
</dbReference>
<dbReference type="PDB" id="6NSQ">
    <property type="method" value="X-ray"/>
    <property type="resolution" value="3.05 A"/>
    <property type="chains" value="A/B=444-723"/>
</dbReference>
<dbReference type="PDB" id="6NYB">
    <property type="method" value="EM"/>
    <property type="resolution" value="4.10 A"/>
    <property type="chains" value="A=1-766"/>
</dbReference>
<dbReference type="PDB" id="6P3D">
    <property type="method" value="X-ray"/>
    <property type="resolution" value="2.11 A"/>
    <property type="chains" value="A=448-721"/>
</dbReference>
<dbReference type="PDB" id="6P7G">
    <property type="method" value="X-ray"/>
    <property type="resolution" value="2.65 A"/>
    <property type="chains" value="A/B/C/D=448-723"/>
</dbReference>
<dbReference type="PDB" id="6PP9">
    <property type="method" value="X-ray"/>
    <property type="resolution" value="2.59 A"/>
    <property type="chains" value="A=445-723"/>
</dbReference>
<dbReference type="PDB" id="6Q0J">
    <property type="method" value="EM"/>
    <property type="resolution" value="4.90 A"/>
    <property type="chains" value="A/B=1-766"/>
</dbReference>
<dbReference type="PDB" id="6Q0K">
    <property type="method" value="EM"/>
    <property type="resolution" value="6.80 A"/>
    <property type="chains" value="A/B=1-766"/>
</dbReference>
<dbReference type="PDB" id="6Q0T">
    <property type="method" value="EM"/>
    <property type="resolution" value="5.70 A"/>
    <property type="chains" value="A/B=1-766"/>
</dbReference>
<dbReference type="PDB" id="6U2G">
    <property type="method" value="X-ray"/>
    <property type="resolution" value="2.89 A"/>
    <property type="chains" value="B=432-726"/>
</dbReference>
<dbReference type="PDB" id="6U2H">
    <property type="method" value="X-ray"/>
    <property type="resolution" value="2.50 A"/>
    <property type="chains" value="C/D=447-735"/>
</dbReference>
<dbReference type="PDB" id="6UAN">
    <property type="method" value="EM"/>
    <property type="resolution" value="3.90 A"/>
    <property type="chains" value="B/C=1-766"/>
</dbReference>
<dbReference type="PDB" id="6UUO">
    <property type="method" value="X-ray"/>
    <property type="resolution" value="3.29 A"/>
    <property type="chains" value="A/B=444-723"/>
</dbReference>
<dbReference type="PDB" id="6V2U">
    <property type="method" value="X-ray"/>
    <property type="resolution" value="3.78 A"/>
    <property type="chains" value="A/B=445-723"/>
</dbReference>
<dbReference type="PDB" id="6V2W">
    <property type="method" value="X-ray"/>
    <property type="resolution" value="3.12 A"/>
    <property type="chains" value="A=445-723"/>
</dbReference>
<dbReference type="PDB" id="6V34">
    <property type="method" value="X-ray"/>
    <property type="resolution" value="3.15 A"/>
    <property type="chains" value="A/B=448-721"/>
</dbReference>
<dbReference type="PDB" id="6XAG">
    <property type="method" value="X-ray"/>
    <property type="resolution" value="3.30 A"/>
    <property type="chains" value="C/D=447-735"/>
</dbReference>
<dbReference type="PDB" id="6XFP">
    <property type="method" value="X-ray"/>
    <property type="resolution" value="2.00 A"/>
    <property type="chains" value="A=442-721"/>
</dbReference>
<dbReference type="PDB" id="6XLO">
    <property type="method" value="X-ray"/>
    <property type="resolution" value="2.49 A"/>
    <property type="chains" value="A/B=442-721"/>
</dbReference>
<dbReference type="PDB" id="7K0V">
    <property type="method" value="X-ray"/>
    <property type="resolution" value="1.93 A"/>
    <property type="chains" value="A/B/C/D=444-723"/>
</dbReference>
<dbReference type="PDB" id="7M0T">
    <property type="method" value="X-ray"/>
    <property type="resolution" value="3.19 A"/>
    <property type="chains" value="A=445-723"/>
</dbReference>
<dbReference type="PDB" id="7M0U">
    <property type="method" value="X-ray"/>
    <property type="resolution" value="3.09 A"/>
    <property type="chains" value="A=445-723"/>
</dbReference>
<dbReference type="PDB" id="7M0V">
    <property type="method" value="X-ray"/>
    <property type="resolution" value="3.16 A"/>
    <property type="chains" value="A=445-723"/>
</dbReference>
<dbReference type="PDB" id="7M0W">
    <property type="method" value="X-ray"/>
    <property type="resolution" value="3.09 A"/>
    <property type="chains" value="A=445-723"/>
</dbReference>
<dbReference type="PDB" id="7M0X">
    <property type="method" value="X-ray"/>
    <property type="resolution" value="2.47 A"/>
    <property type="chains" value="A=445-723"/>
</dbReference>
<dbReference type="PDB" id="7M0Y">
    <property type="method" value="X-ray"/>
    <property type="resolution" value="3.45 A"/>
    <property type="chains" value="A=445-723"/>
</dbReference>
<dbReference type="PDB" id="7M0Z">
    <property type="method" value="X-ray"/>
    <property type="resolution" value="3.12 A"/>
    <property type="chains" value="A=445-723"/>
</dbReference>
<dbReference type="PDB" id="7MFD">
    <property type="method" value="EM"/>
    <property type="resolution" value="3.66 A"/>
    <property type="chains" value="A=1-766"/>
</dbReference>
<dbReference type="PDB" id="7MFE">
    <property type="method" value="EM"/>
    <property type="resolution" value="4.07 A"/>
    <property type="chains" value="A=1-766"/>
</dbReference>
<dbReference type="PDB" id="7MFF">
    <property type="method" value="EM"/>
    <property type="resolution" value="3.89 A"/>
    <property type="chains" value="A/B=1-766"/>
</dbReference>
<dbReference type="PDB" id="7P3V">
    <property type="method" value="X-ray"/>
    <property type="resolution" value="2.37 A"/>
    <property type="chains" value="A/B=448-719"/>
</dbReference>
<dbReference type="PDB" id="7SHV">
    <property type="method" value="X-ray"/>
    <property type="resolution" value="2.88 A"/>
    <property type="chains" value="A/B=432-726"/>
</dbReference>
<dbReference type="PDB" id="7ZR0">
    <property type="method" value="EM"/>
    <property type="resolution" value="3.40 A"/>
    <property type="chains" value="K=1-766"/>
</dbReference>
<dbReference type="PDB" id="7ZR5">
    <property type="method" value="EM"/>
    <property type="resolution" value="3.90 A"/>
    <property type="chains" value="K=1-766"/>
</dbReference>
<dbReference type="PDB" id="7ZR6">
    <property type="method" value="EM"/>
    <property type="resolution" value="4.20 A"/>
    <property type="chains" value="K=1-766"/>
</dbReference>
<dbReference type="PDB" id="8C7X">
    <property type="method" value="X-ray"/>
    <property type="resolution" value="1.65 A"/>
    <property type="chains" value="A/B=444-721"/>
</dbReference>
<dbReference type="PDB" id="8C7Y">
    <property type="method" value="X-ray"/>
    <property type="resolution" value="1.65 A"/>
    <property type="chains" value="A/B=444-721"/>
</dbReference>
<dbReference type="PDB" id="8DGS">
    <property type="method" value="EM"/>
    <property type="resolution" value="4.30 A"/>
    <property type="chains" value="A=1-766"/>
</dbReference>
<dbReference type="PDB" id="8DGT">
    <property type="method" value="EM"/>
    <property type="resolution" value="3.90 A"/>
    <property type="chains" value="A=1-766"/>
</dbReference>
<dbReference type="PDB" id="8F7O">
    <property type="method" value="X-ray"/>
    <property type="resolution" value="3.54 A"/>
    <property type="chains" value="A/B=441-723"/>
</dbReference>
<dbReference type="PDB" id="8F7P">
    <property type="method" value="X-ray"/>
    <property type="resolution" value="2.74 A"/>
    <property type="chains" value="A/B=441-723"/>
</dbReference>
<dbReference type="PDB" id="8QQG">
    <property type="method" value="X-ray"/>
    <property type="resolution" value="2.98 A"/>
    <property type="chains" value="A/B/C=448-722"/>
</dbReference>
<dbReference type="PDB" id="9AXX">
    <property type="method" value="X-ray"/>
    <property type="resolution" value="2.07 A"/>
    <property type="chains" value="B/D=445-723"/>
</dbReference>
<dbReference type="PDB" id="9AXY">
    <property type="method" value="X-ray"/>
    <property type="resolution" value="3.60 A"/>
    <property type="chains" value="A=445-723"/>
</dbReference>
<dbReference type="PDB" id="9BFB">
    <property type="method" value="X-ray"/>
    <property type="resolution" value="1.92 A"/>
    <property type="chains" value="A=445-723"/>
</dbReference>
<dbReference type="PDB" id="9F35">
    <property type="method" value="X-ray"/>
    <property type="resolution" value="2.30 A"/>
    <property type="chains" value="B=360-370"/>
</dbReference>
<dbReference type="PDBsum" id="1UWH"/>
<dbReference type="PDBsum" id="1UWJ"/>
<dbReference type="PDBsum" id="2FB8"/>
<dbReference type="PDBsum" id="2L05"/>
<dbReference type="PDBsum" id="3C4C"/>
<dbReference type="PDBsum" id="3D4Q"/>
<dbReference type="PDBsum" id="3IDP"/>
<dbReference type="PDBsum" id="3II5"/>
<dbReference type="PDBsum" id="3NY5"/>
<dbReference type="PDBsum" id="3OG7"/>
<dbReference type="PDBsum" id="3PPJ"/>
<dbReference type="PDBsum" id="3PPK"/>
<dbReference type="PDBsum" id="3PRF"/>
<dbReference type="PDBsum" id="3PRI"/>
<dbReference type="PDBsum" id="3PSB"/>
<dbReference type="PDBsum" id="3PSD"/>
<dbReference type="PDBsum" id="3Q4C"/>
<dbReference type="PDBsum" id="3Q96"/>
<dbReference type="PDBsum" id="3SKC"/>
<dbReference type="PDBsum" id="3TV4"/>
<dbReference type="PDBsum" id="3TV6"/>
<dbReference type="PDBsum" id="4CQE"/>
<dbReference type="PDBsum" id="4DBN"/>
<dbReference type="PDBsum" id="4E26"/>
<dbReference type="PDBsum" id="4E4X"/>
<dbReference type="PDBsum" id="4EHE"/>
<dbReference type="PDBsum" id="4EHG"/>
<dbReference type="PDBsum" id="4FC0"/>
<dbReference type="PDBsum" id="4FK3"/>
<dbReference type="PDBsum" id="4G9C"/>
<dbReference type="PDBsum" id="4G9R"/>
<dbReference type="PDBsum" id="4H58"/>
<dbReference type="PDBsum" id="4JVG"/>
<dbReference type="PDBsum" id="4KSP"/>
<dbReference type="PDBsum" id="4KSQ"/>
<dbReference type="PDBsum" id="4MBJ"/>
<dbReference type="PDBsum" id="4MNE"/>
<dbReference type="PDBsum" id="4MNF"/>
<dbReference type="PDBsum" id="4PP7"/>
<dbReference type="PDBsum" id="4R5Y"/>
<dbReference type="PDBsum" id="4RZV"/>
<dbReference type="PDBsum" id="4RZW"/>
<dbReference type="PDBsum" id="4WO5"/>
<dbReference type="PDBsum" id="4XV1"/>
<dbReference type="PDBsum" id="4XV2"/>
<dbReference type="PDBsum" id="4XV3"/>
<dbReference type="PDBsum" id="4XV9"/>
<dbReference type="PDBsum" id="4YHT"/>
<dbReference type="PDBsum" id="5C9C"/>
<dbReference type="PDBsum" id="5CSW"/>
<dbReference type="PDBsum" id="5CSX"/>
<dbReference type="PDBsum" id="5CT7"/>
<dbReference type="PDBsum" id="5FD2"/>
<dbReference type="PDBsum" id="5HI2"/>
<dbReference type="PDBsum" id="5HID"/>
<dbReference type="PDBsum" id="5HIE"/>
<dbReference type="PDBsum" id="5ITA"/>
<dbReference type="PDBsum" id="5J17"/>
<dbReference type="PDBsum" id="5J18"/>
<dbReference type="PDBsum" id="5J2R"/>
<dbReference type="PDBsum" id="5JRQ"/>
<dbReference type="PDBsum" id="5JSM"/>
<dbReference type="PDBsum" id="5JT2"/>
<dbReference type="PDBsum" id="5VAL"/>
<dbReference type="PDBsum" id="5VAM"/>
<dbReference type="PDBsum" id="5VR3"/>
<dbReference type="PDBsum" id="5VYK"/>
<dbReference type="PDBsum" id="6B8U"/>
<dbReference type="PDBsum" id="6CAD"/>
<dbReference type="PDBsum" id="6N0P"/>
<dbReference type="PDBsum" id="6N0Q"/>
<dbReference type="PDBsum" id="6NSQ"/>
<dbReference type="PDBsum" id="6NYB"/>
<dbReference type="PDBsum" id="6P3D"/>
<dbReference type="PDBsum" id="6P7G"/>
<dbReference type="PDBsum" id="6PP9"/>
<dbReference type="PDBsum" id="6Q0J"/>
<dbReference type="PDBsum" id="6Q0K"/>
<dbReference type="PDBsum" id="6Q0T"/>
<dbReference type="PDBsum" id="6U2G"/>
<dbReference type="PDBsum" id="6U2H"/>
<dbReference type="PDBsum" id="6UAN"/>
<dbReference type="PDBsum" id="6UUO"/>
<dbReference type="PDBsum" id="6V2U"/>
<dbReference type="PDBsum" id="6V2W"/>
<dbReference type="PDBsum" id="6V34"/>
<dbReference type="PDBsum" id="6XAG"/>
<dbReference type="PDBsum" id="6XFP"/>
<dbReference type="PDBsum" id="6XLO"/>
<dbReference type="PDBsum" id="7K0V"/>
<dbReference type="PDBsum" id="7M0T"/>
<dbReference type="PDBsum" id="7M0U"/>
<dbReference type="PDBsum" id="7M0V"/>
<dbReference type="PDBsum" id="7M0W"/>
<dbReference type="PDBsum" id="7M0X"/>
<dbReference type="PDBsum" id="7M0Y"/>
<dbReference type="PDBsum" id="7M0Z"/>
<dbReference type="PDBsum" id="7MFD"/>
<dbReference type="PDBsum" id="7MFE"/>
<dbReference type="PDBsum" id="7MFF"/>
<dbReference type="PDBsum" id="7P3V"/>
<dbReference type="PDBsum" id="7SHV"/>
<dbReference type="PDBsum" id="7ZR0"/>
<dbReference type="PDBsum" id="7ZR5"/>
<dbReference type="PDBsum" id="7ZR6"/>
<dbReference type="PDBsum" id="8C7X"/>
<dbReference type="PDBsum" id="8C7Y"/>
<dbReference type="PDBsum" id="8DGS"/>
<dbReference type="PDBsum" id="8DGT"/>
<dbReference type="PDBsum" id="8F7O"/>
<dbReference type="PDBsum" id="8F7P"/>
<dbReference type="PDBsum" id="8QQG"/>
<dbReference type="PDBsum" id="9AXX"/>
<dbReference type="PDBsum" id="9AXY"/>
<dbReference type="PDBsum" id="9BFB"/>
<dbReference type="PDBsum" id="9F35"/>
<dbReference type="BMRB" id="P15056"/>
<dbReference type="EMDB" id="EMD-0541"/>
<dbReference type="EMDB" id="EMD-14875"/>
<dbReference type="EMDB" id="EMD-14883"/>
<dbReference type="EMDB" id="EMD-14884"/>
<dbReference type="EMDB" id="EMD-20550"/>
<dbReference type="EMDB" id="EMD-20551"/>
<dbReference type="EMDB" id="EMD-20552"/>
<dbReference type="EMDB" id="EMD-20708"/>
<dbReference type="EMDB" id="EMD-23813"/>
<dbReference type="EMDB" id="EMD-23814"/>
<dbReference type="EMDB" id="EMD-23815"/>
<dbReference type="EMDB" id="EMD-27428"/>
<dbReference type="EMDB" id="EMD-27429"/>
<dbReference type="SMR" id="P15056"/>
<dbReference type="BioGRID" id="107141">
    <property type="interactions" value="185"/>
</dbReference>
<dbReference type="CORUM" id="P15056"/>
<dbReference type="DIP" id="DIP-1045N"/>
<dbReference type="FunCoup" id="P15056">
    <property type="interactions" value="5390"/>
</dbReference>
<dbReference type="IntAct" id="P15056">
    <property type="interactions" value="96"/>
</dbReference>
<dbReference type="MINT" id="P15056"/>
<dbReference type="STRING" id="9606.ENSP00000419060"/>
<dbReference type="BindingDB" id="P15056"/>
<dbReference type="ChEMBL" id="CHEMBL5145"/>
<dbReference type="DrugBank" id="DB08553">
    <property type="generic name" value="(1E)-5-(1-piperidin-4-yl-3-pyridin-4-yl-1H-pyrazol-4-yl)-2,3-dihydro-1H-inden-1-one oxime"/>
</dbReference>
<dbReference type="DrugBank" id="DB15068">
    <property type="generic name" value="Agerafenib"/>
</dbReference>
<dbReference type="DrugBank" id="DB15254">
    <property type="generic name" value="Avutometinib"/>
</dbReference>
<dbReference type="DrugBank" id="DB12854">
    <property type="generic name" value="BMS-908662"/>
</dbReference>
<dbReference type="DrugBank" id="DB08912">
    <property type="generic name" value="Dabrafenib"/>
</dbReference>
<dbReference type="DrugBank" id="DB11718">
    <property type="generic name" value="Encorafenib"/>
</dbReference>
<dbReference type="DrugBank" id="DB12010">
    <property type="generic name" value="Fostamatinib"/>
</dbReference>
<dbReference type="DrugBank" id="DB14773">
    <property type="generic name" value="Lifirafenib"/>
</dbReference>
<dbReference type="DrugBank" id="DB07000">
    <property type="generic name" value="N-{2,4-difluoro-3-[(5-pyridin-3-yl-1H-pyrrolo[2,3-b]pyridin-3-yl)carbonyl]phenyl}ethanesulfonamide"/>
</dbReference>
<dbReference type="DrugBank" id="DB06999">
    <property type="generic name" value="PLX-4720"/>
</dbReference>
<dbReference type="DrugBank" id="DB16038">
    <property type="generic name" value="PLX8394"/>
</dbReference>
<dbReference type="DrugBank" id="DB05984">
    <property type="generic name" value="RAF-265"/>
</dbReference>
<dbReference type="DrugBank" id="DB08896">
    <property type="generic name" value="Regorafenib"/>
</dbReference>
<dbReference type="DrugBank" id="DB14840">
    <property type="generic name" value="Ripretinib"/>
</dbReference>
<dbReference type="DrugBank" id="DB00398">
    <property type="generic name" value="Sorafenib"/>
</dbReference>
<dbReference type="DrugBank" id="DB15266">
    <property type="generic name" value="Tovorafenib"/>
</dbReference>
<dbReference type="DrugBank" id="DB08881">
    <property type="generic name" value="Vemurafenib"/>
</dbReference>
<dbReference type="DrugBank" id="DB05190">
    <property type="generic name" value="XL281"/>
</dbReference>
<dbReference type="DrugCentral" id="P15056"/>
<dbReference type="GuidetoPHARMACOLOGY" id="1943"/>
<dbReference type="TCDB" id="8.A.23.1.48">
    <property type="family name" value="the basigin (basigin) family"/>
</dbReference>
<dbReference type="GlyGen" id="P15056">
    <property type="glycosylation" value="1 site"/>
</dbReference>
<dbReference type="iPTMnet" id="P15056"/>
<dbReference type="PhosphoSitePlus" id="P15056"/>
<dbReference type="BioMuta" id="BRAF"/>
<dbReference type="DMDM" id="50403720"/>
<dbReference type="CPTAC" id="CPTAC-3112"/>
<dbReference type="CPTAC" id="CPTAC-3113"/>
<dbReference type="CPTAC" id="CPTAC-5771"/>
<dbReference type="CPTAC" id="CPTAC-5817"/>
<dbReference type="CPTAC" id="CPTAC-5818"/>
<dbReference type="CPTAC" id="CPTAC-5819"/>
<dbReference type="CPTAC" id="CPTAC-5820"/>
<dbReference type="CPTAC" id="CPTAC-5821"/>
<dbReference type="CPTAC" id="CPTAC-5822"/>
<dbReference type="CPTAC" id="non-CPTAC-5352"/>
<dbReference type="CPTAC" id="non-CPTAC-5353"/>
<dbReference type="CPTAC" id="non-CPTAC-5354"/>
<dbReference type="CPTAC" id="non-CPTAC-5355"/>
<dbReference type="CPTAC" id="non-CPTAC-5356"/>
<dbReference type="CPTAC" id="non-CPTAC-5357"/>
<dbReference type="CPTAC" id="non-CPTAC-5727"/>
<dbReference type="CPTAC" id="non-CPTAC-5728"/>
<dbReference type="CPTAC" id="non-CPTAC-5729"/>
<dbReference type="jPOST" id="P15056"/>
<dbReference type="MassIVE" id="P15056"/>
<dbReference type="PaxDb" id="9606-ENSP00000288602"/>
<dbReference type="PeptideAtlas" id="P15056"/>
<dbReference type="ProteomicsDB" id="53102"/>
<dbReference type="Pumba" id="P15056"/>
<dbReference type="Antibodypedia" id="751">
    <property type="antibodies" value="2314 antibodies from 53 providers"/>
</dbReference>
<dbReference type="CPTC" id="P15056">
    <property type="antibodies" value="7 antibodies"/>
</dbReference>
<dbReference type="DNASU" id="673"/>
<dbReference type="Ensembl" id="ENST00000646891.2">
    <property type="protein sequence ID" value="ENSP00000493543.1"/>
    <property type="gene ID" value="ENSG00000157764.14"/>
</dbReference>
<dbReference type="GeneID" id="673"/>
<dbReference type="KEGG" id="hsa:673"/>
<dbReference type="MANE-Select" id="ENST00000646891.2">
    <property type="protein sequence ID" value="ENSP00000493543.1"/>
    <property type="RefSeq nucleotide sequence ID" value="NM_004333.6"/>
    <property type="RefSeq protein sequence ID" value="NP_004324.2"/>
</dbReference>
<dbReference type="UCSC" id="uc003vwc.5">
    <property type="organism name" value="human"/>
</dbReference>
<dbReference type="AGR" id="HGNC:1097"/>
<dbReference type="CTD" id="673"/>
<dbReference type="DisGeNET" id="673"/>
<dbReference type="GeneCards" id="BRAF"/>
<dbReference type="GeneReviews" id="BRAF"/>
<dbReference type="HGNC" id="HGNC:1097">
    <property type="gene designation" value="BRAF"/>
</dbReference>
<dbReference type="HPA" id="ENSG00000157764">
    <property type="expression patterns" value="Low tissue specificity"/>
</dbReference>
<dbReference type="MalaCards" id="BRAF"/>
<dbReference type="MIM" id="114500">
    <property type="type" value="phenotype"/>
</dbReference>
<dbReference type="MIM" id="115150">
    <property type="type" value="phenotype"/>
</dbReference>
<dbReference type="MIM" id="164757">
    <property type="type" value="gene"/>
</dbReference>
<dbReference type="MIM" id="211980">
    <property type="type" value="phenotype"/>
</dbReference>
<dbReference type="MIM" id="605027">
    <property type="type" value="phenotype"/>
</dbReference>
<dbReference type="MIM" id="613706">
    <property type="type" value="phenotype"/>
</dbReference>
<dbReference type="MIM" id="613707">
    <property type="type" value="phenotype"/>
</dbReference>
<dbReference type="neXtProt" id="NX_P15056"/>
<dbReference type="OpenTargets" id="ENSG00000157764"/>
<dbReference type="Orphanet" id="1340">
    <property type="disease" value="Cardiofaciocutaneous syndrome"/>
</dbReference>
<dbReference type="Orphanet" id="58017">
    <property type="disease" value="Classic hairy cell leukemia"/>
</dbReference>
<dbReference type="Orphanet" id="54595">
    <property type="disease" value="Craniopharyngioma"/>
</dbReference>
<dbReference type="Orphanet" id="96253">
    <property type="disease" value="Cushing disease"/>
</dbReference>
<dbReference type="Orphanet" id="146">
    <property type="disease" value="Differentiated thyroid carcinoma"/>
</dbReference>
<dbReference type="Orphanet" id="389">
    <property type="disease" value="Langerhans cell histiocytosis"/>
</dbReference>
<dbReference type="Orphanet" id="626">
    <property type="disease" value="Large/giant congenital melanocytic nevus"/>
</dbReference>
<dbReference type="Orphanet" id="648">
    <property type="disease" value="Noonan syndrome"/>
</dbReference>
<dbReference type="Orphanet" id="500">
    <property type="disease" value="Noonan syndrome with multiple lentigines"/>
</dbReference>
<dbReference type="Orphanet" id="251615">
    <property type="disease" value="Pilomyxoid astrocytoma"/>
</dbReference>
<dbReference type="Orphanet" id="840">
    <property type="disease" value="Syringocystadenoma papilliferum"/>
</dbReference>
<dbReference type="PharmGKB" id="PA25408"/>
<dbReference type="VEuPathDB" id="HostDB:ENSG00000157764"/>
<dbReference type="eggNOG" id="KOG0193">
    <property type="taxonomic scope" value="Eukaryota"/>
</dbReference>
<dbReference type="GeneTree" id="ENSGT00940000156154"/>
<dbReference type="HOGENOM" id="CLU_023684_1_0_1"/>
<dbReference type="InParanoid" id="P15056"/>
<dbReference type="OrthoDB" id="774951at2759"/>
<dbReference type="PAN-GO" id="P15056">
    <property type="GO annotations" value="3 GO annotations based on evolutionary models"/>
</dbReference>
<dbReference type="PhylomeDB" id="P15056"/>
<dbReference type="TreeFam" id="TF317006"/>
<dbReference type="BRENDA" id="2.7.10.2">
    <property type="organism ID" value="2681"/>
</dbReference>
<dbReference type="BRENDA" id="2.7.11.1">
    <property type="organism ID" value="2681"/>
</dbReference>
<dbReference type="PathwayCommons" id="P15056"/>
<dbReference type="Reactome" id="R-HSA-1295596">
    <property type="pathway name" value="Spry regulation of FGF signaling"/>
</dbReference>
<dbReference type="Reactome" id="R-HSA-170968">
    <property type="pathway name" value="Frs2-mediated activation"/>
</dbReference>
<dbReference type="Reactome" id="R-HSA-170984">
    <property type="pathway name" value="ARMS-mediated activation"/>
</dbReference>
<dbReference type="Reactome" id="R-HSA-187706">
    <property type="pathway name" value="Signalling to p38 via RIT and RIN"/>
</dbReference>
<dbReference type="Reactome" id="R-HSA-5673000">
    <property type="pathway name" value="RAF activation"/>
</dbReference>
<dbReference type="Reactome" id="R-HSA-5674135">
    <property type="pathway name" value="MAP2K and MAPK activation"/>
</dbReference>
<dbReference type="Reactome" id="R-HSA-5674499">
    <property type="pathway name" value="Negative feedback regulation of MAPK pathway"/>
</dbReference>
<dbReference type="Reactome" id="R-HSA-5675221">
    <property type="pathway name" value="Negative regulation of MAPK pathway"/>
</dbReference>
<dbReference type="Reactome" id="R-HSA-6802946">
    <property type="pathway name" value="Signaling by moderate kinase activity BRAF mutants"/>
</dbReference>
<dbReference type="Reactome" id="R-HSA-6802948">
    <property type="pathway name" value="Signaling by high-kinase activity BRAF mutants"/>
</dbReference>
<dbReference type="Reactome" id="R-HSA-6802952">
    <property type="pathway name" value="Signaling by BRAF and RAF1 fusions"/>
</dbReference>
<dbReference type="Reactome" id="R-HSA-6802955">
    <property type="pathway name" value="Paradoxical activation of RAF signaling by kinase inactive BRAF"/>
</dbReference>
<dbReference type="Reactome" id="R-HSA-9649948">
    <property type="pathway name" value="Signaling downstream of RAS mutants"/>
</dbReference>
<dbReference type="Reactome" id="R-HSA-9656223">
    <property type="pathway name" value="Signaling by RAF1 mutants"/>
</dbReference>
<dbReference type="Reactome" id="R-HSA-9726840">
    <property type="pathway name" value="SHOC2 M1731 mutant abolishes MRAS complex function"/>
</dbReference>
<dbReference type="Reactome" id="R-HSA-9726842">
    <property type="pathway name" value="Gain-of-function MRAS complexes activate RAF signaling"/>
</dbReference>
<dbReference type="SignaLink" id="P15056"/>
<dbReference type="SIGNOR" id="P15056"/>
<dbReference type="BioGRID-ORCS" id="673">
    <property type="hits" value="88 hits in 1213 CRISPR screens"/>
</dbReference>
<dbReference type="CD-CODE" id="8C2F96ED">
    <property type="entry name" value="Centrosome"/>
</dbReference>
<dbReference type="CD-CODE" id="D57F7ABA">
    <property type="entry name" value="Synthetic Condensate 000274"/>
</dbReference>
<dbReference type="ChiTaRS" id="BRAF">
    <property type="organism name" value="human"/>
</dbReference>
<dbReference type="EvolutionaryTrace" id="P15056"/>
<dbReference type="GeneWiki" id="BRAF_(gene)"/>
<dbReference type="GenomeRNAi" id="673"/>
<dbReference type="Pharos" id="P15056">
    <property type="development level" value="Tclin"/>
</dbReference>
<dbReference type="PRO" id="PR:P15056"/>
<dbReference type="Proteomes" id="UP000005640">
    <property type="component" value="Chromosome 7"/>
</dbReference>
<dbReference type="RNAct" id="P15056">
    <property type="molecule type" value="protein"/>
</dbReference>
<dbReference type="Bgee" id="ENSG00000157764">
    <property type="expression patterns" value="Expressed in buccal mucosa cell and 183 other cell types or tissues"/>
</dbReference>
<dbReference type="ExpressionAtlas" id="P15056">
    <property type="expression patterns" value="baseline and differential"/>
</dbReference>
<dbReference type="GO" id="GO:0044297">
    <property type="term" value="C:cell body"/>
    <property type="evidence" value="ECO:0007669"/>
    <property type="project" value="Ensembl"/>
</dbReference>
<dbReference type="GO" id="GO:0034451">
    <property type="term" value="C:centriolar satellite"/>
    <property type="evidence" value="ECO:0000314"/>
    <property type="project" value="HPA"/>
</dbReference>
<dbReference type="GO" id="GO:0036064">
    <property type="term" value="C:ciliary basal body"/>
    <property type="evidence" value="ECO:0000314"/>
    <property type="project" value="HPA"/>
</dbReference>
<dbReference type="GO" id="GO:0005929">
    <property type="term" value="C:cilium"/>
    <property type="evidence" value="ECO:0000314"/>
    <property type="project" value="HPA"/>
</dbReference>
<dbReference type="GO" id="GO:0005737">
    <property type="term" value="C:cytoplasm"/>
    <property type="evidence" value="ECO:0000318"/>
    <property type="project" value="GO_Central"/>
</dbReference>
<dbReference type="GO" id="GO:0005829">
    <property type="term" value="C:cytosol"/>
    <property type="evidence" value="ECO:0000314"/>
    <property type="project" value="HPA"/>
</dbReference>
<dbReference type="GO" id="GO:0098978">
    <property type="term" value="C:glutamatergic synapse"/>
    <property type="evidence" value="ECO:0007669"/>
    <property type="project" value="Ensembl"/>
</dbReference>
<dbReference type="GO" id="GO:0043231">
    <property type="term" value="C:intracellular membrane-bounded organelle"/>
    <property type="evidence" value="ECO:0000314"/>
    <property type="project" value="HPA"/>
</dbReference>
<dbReference type="GO" id="GO:0005739">
    <property type="term" value="C:mitochondrion"/>
    <property type="evidence" value="ECO:0000318"/>
    <property type="project" value="GO_Central"/>
</dbReference>
<dbReference type="GO" id="GO:0043005">
    <property type="term" value="C:neuron projection"/>
    <property type="evidence" value="ECO:0007669"/>
    <property type="project" value="Ensembl"/>
</dbReference>
<dbReference type="GO" id="GO:0005634">
    <property type="term" value="C:nucleus"/>
    <property type="evidence" value="ECO:0007669"/>
    <property type="project" value="UniProtKB-SubCell"/>
</dbReference>
<dbReference type="GO" id="GO:0005886">
    <property type="term" value="C:plasma membrane"/>
    <property type="evidence" value="ECO:0000318"/>
    <property type="project" value="GO_Central"/>
</dbReference>
<dbReference type="GO" id="GO:0098794">
    <property type="term" value="C:postsynapse"/>
    <property type="evidence" value="ECO:0007669"/>
    <property type="project" value="GOC"/>
</dbReference>
<dbReference type="GO" id="GO:0098793">
    <property type="term" value="C:presynapse"/>
    <property type="evidence" value="ECO:0007669"/>
    <property type="project" value="GOC"/>
</dbReference>
<dbReference type="GO" id="GO:0005524">
    <property type="term" value="F:ATP binding"/>
    <property type="evidence" value="ECO:0007669"/>
    <property type="project" value="UniProtKB-KW"/>
</dbReference>
<dbReference type="GO" id="GO:0005509">
    <property type="term" value="F:calcium ion binding"/>
    <property type="evidence" value="ECO:0000314"/>
    <property type="project" value="BHF-UCL"/>
</dbReference>
<dbReference type="GO" id="GO:0042802">
    <property type="term" value="F:identical protein binding"/>
    <property type="evidence" value="ECO:0000353"/>
    <property type="project" value="IntAct"/>
</dbReference>
<dbReference type="GO" id="GO:0004708">
    <property type="term" value="F:MAP kinase kinase activity"/>
    <property type="evidence" value="ECO:0000315"/>
    <property type="project" value="UniProtKB"/>
</dbReference>
<dbReference type="GO" id="GO:0004709">
    <property type="term" value="F:MAP kinase kinase kinase activity"/>
    <property type="evidence" value="ECO:0000318"/>
    <property type="project" value="GO_Central"/>
</dbReference>
<dbReference type="GO" id="GO:0004672">
    <property type="term" value="F:protein kinase activity"/>
    <property type="evidence" value="ECO:0000314"/>
    <property type="project" value="BHF-UCL"/>
</dbReference>
<dbReference type="GO" id="GO:0106310">
    <property type="term" value="F:protein serine kinase activity"/>
    <property type="evidence" value="ECO:0007669"/>
    <property type="project" value="RHEA"/>
</dbReference>
<dbReference type="GO" id="GO:0004674">
    <property type="term" value="F:protein serine/threonine kinase activity"/>
    <property type="evidence" value="ECO:0000314"/>
    <property type="project" value="UniProtKB"/>
</dbReference>
<dbReference type="GO" id="GO:0097110">
    <property type="term" value="F:scaffold protein binding"/>
    <property type="evidence" value="ECO:0000353"/>
    <property type="project" value="BHF-UCL"/>
</dbReference>
<dbReference type="GO" id="GO:0008270">
    <property type="term" value="F:zinc ion binding"/>
    <property type="evidence" value="ECO:0007669"/>
    <property type="project" value="UniProtKB-KW"/>
</dbReference>
<dbReference type="GO" id="GO:0009887">
    <property type="term" value="P:animal organ morphogenesis"/>
    <property type="evidence" value="ECO:0000304"/>
    <property type="project" value="ProtInc"/>
</dbReference>
<dbReference type="GO" id="GO:0043369">
    <property type="term" value="P:CD4-positive or CD8-positive, alpha-beta T cell lineage commitment"/>
    <property type="evidence" value="ECO:0007669"/>
    <property type="project" value="Ensembl"/>
</dbReference>
<dbReference type="GO" id="GO:0043367">
    <property type="term" value="P:CD4-positive, alpha-beta T cell differentiation"/>
    <property type="evidence" value="ECO:0007669"/>
    <property type="project" value="Ensembl"/>
</dbReference>
<dbReference type="GO" id="GO:0071277">
    <property type="term" value="P:cellular response to calcium ion"/>
    <property type="evidence" value="ECO:0000314"/>
    <property type="project" value="BHF-UCL"/>
</dbReference>
<dbReference type="GO" id="GO:0071466">
    <property type="term" value="P:cellular response to xenobiotic stimulus"/>
    <property type="evidence" value="ECO:0007669"/>
    <property type="project" value="Ensembl"/>
</dbReference>
<dbReference type="GO" id="GO:0072577">
    <property type="term" value="P:endothelial cell apoptotic process"/>
    <property type="evidence" value="ECO:0007669"/>
    <property type="project" value="Ensembl"/>
</dbReference>
<dbReference type="GO" id="GO:0007173">
    <property type="term" value="P:epidermal growth factor receptor signaling pathway"/>
    <property type="evidence" value="ECO:0000314"/>
    <property type="project" value="BHF-UCL"/>
</dbReference>
<dbReference type="GO" id="GO:0070371">
    <property type="term" value="P:ERK1 and ERK2 cascade"/>
    <property type="evidence" value="ECO:0007669"/>
    <property type="project" value="Ensembl"/>
</dbReference>
<dbReference type="GO" id="GO:0090150">
    <property type="term" value="P:establishment of protein localization to membrane"/>
    <property type="evidence" value="ECO:0000314"/>
    <property type="project" value="CACAO"/>
</dbReference>
<dbReference type="GO" id="GO:0060324">
    <property type="term" value="P:face development"/>
    <property type="evidence" value="ECO:0007669"/>
    <property type="project" value="Ensembl"/>
</dbReference>
<dbReference type="GO" id="GO:0060323">
    <property type="term" value="P:head morphogenesis"/>
    <property type="evidence" value="ECO:0007669"/>
    <property type="project" value="Ensembl"/>
</dbReference>
<dbReference type="GO" id="GO:0060291">
    <property type="term" value="P:long-term synaptic potentiation"/>
    <property type="evidence" value="ECO:0007669"/>
    <property type="project" value="Ensembl"/>
</dbReference>
<dbReference type="GO" id="GO:0000165">
    <property type="term" value="P:MAPK cascade"/>
    <property type="evidence" value="ECO:0000314"/>
    <property type="project" value="UniProtKB"/>
</dbReference>
<dbReference type="GO" id="GO:0002318">
    <property type="term" value="P:myeloid progenitor cell differentiation"/>
    <property type="evidence" value="ECO:0007669"/>
    <property type="project" value="Ensembl"/>
</dbReference>
<dbReference type="GO" id="GO:0043066">
    <property type="term" value="P:negative regulation of apoptotic process"/>
    <property type="evidence" value="ECO:0000314"/>
    <property type="project" value="UniProtKB"/>
</dbReference>
<dbReference type="GO" id="GO:2000352">
    <property type="term" value="P:negative regulation of endothelial cell apoptotic process"/>
    <property type="evidence" value="ECO:0007669"/>
    <property type="project" value="Ensembl"/>
</dbReference>
<dbReference type="GO" id="GO:0010764">
    <property type="term" value="P:negative regulation of fibroblast migration"/>
    <property type="evidence" value="ECO:0007669"/>
    <property type="project" value="Ensembl"/>
</dbReference>
<dbReference type="GO" id="GO:0043524">
    <property type="term" value="P:negative regulation of neuron apoptotic process"/>
    <property type="evidence" value="ECO:0007669"/>
    <property type="project" value="Ensembl"/>
</dbReference>
<dbReference type="GO" id="GO:2000301">
    <property type="term" value="P:negative regulation of synaptic vesicle exocytosis"/>
    <property type="evidence" value="ECO:0007669"/>
    <property type="project" value="Ensembl"/>
</dbReference>
<dbReference type="GO" id="GO:0048680">
    <property type="term" value="P:positive regulation of axon regeneration"/>
    <property type="evidence" value="ECO:0007669"/>
    <property type="project" value="Ensembl"/>
</dbReference>
<dbReference type="GO" id="GO:0050772">
    <property type="term" value="P:positive regulation of axonogenesis"/>
    <property type="evidence" value="ECO:0007669"/>
    <property type="project" value="Ensembl"/>
</dbReference>
<dbReference type="GO" id="GO:0010828">
    <property type="term" value="P:positive regulation of D-glucose transmembrane transport"/>
    <property type="evidence" value="ECO:0000314"/>
    <property type="project" value="CACAO"/>
</dbReference>
<dbReference type="GO" id="GO:0070374">
    <property type="term" value="P:positive regulation of ERK1 and ERK2 cascade"/>
    <property type="evidence" value="ECO:0000314"/>
    <property type="project" value="BHF-UCL"/>
</dbReference>
<dbReference type="GO" id="GO:0010628">
    <property type="term" value="P:positive regulation of gene expression"/>
    <property type="evidence" value="ECO:0000315"/>
    <property type="project" value="BHF-UCL"/>
</dbReference>
<dbReference type="GO" id="GO:0033138">
    <property type="term" value="P:positive regulation of peptidyl-serine phosphorylation"/>
    <property type="evidence" value="ECO:0000314"/>
    <property type="project" value="UniProtKB"/>
</dbReference>
<dbReference type="GO" id="GO:0051496">
    <property type="term" value="P:positive regulation of stress fiber assembly"/>
    <property type="evidence" value="ECO:0007669"/>
    <property type="project" value="Ensembl"/>
</dbReference>
<dbReference type="GO" id="GO:1900026">
    <property type="term" value="P:positive regulation of substrate adhesion-dependent cell spreading"/>
    <property type="evidence" value="ECO:0007669"/>
    <property type="project" value="Ensembl"/>
</dbReference>
<dbReference type="GO" id="GO:0099170">
    <property type="term" value="P:postsynaptic modulation of chemical synaptic transmission"/>
    <property type="evidence" value="ECO:0007669"/>
    <property type="project" value="Ensembl"/>
</dbReference>
<dbReference type="GO" id="GO:0006468">
    <property type="term" value="P:protein phosphorylation"/>
    <property type="evidence" value="ECO:0000304"/>
    <property type="project" value="ProtInc"/>
</dbReference>
<dbReference type="GO" id="GO:0042127">
    <property type="term" value="P:regulation of cell population proliferation"/>
    <property type="evidence" value="ECO:0007669"/>
    <property type="project" value="Ensembl"/>
</dbReference>
<dbReference type="GO" id="GO:0045580">
    <property type="term" value="P:regulation of T cell differentiation"/>
    <property type="evidence" value="ECO:0007669"/>
    <property type="project" value="Ensembl"/>
</dbReference>
<dbReference type="GO" id="GO:0035019">
    <property type="term" value="P:somatic stem cell population maintenance"/>
    <property type="evidence" value="ECO:0007669"/>
    <property type="project" value="Ensembl"/>
</dbReference>
<dbReference type="GO" id="GO:0043149">
    <property type="term" value="P:stress fiber assembly"/>
    <property type="evidence" value="ECO:0007669"/>
    <property type="project" value="Ensembl"/>
</dbReference>
<dbReference type="GO" id="GO:0034446">
    <property type="term" value="P:substrate adhesion-dependent cell spreading"/>
    <property type="evidence" value="ECO:0007669"/>
    <property type="project" value="Ensembl"/>
</dbReference>
<dbReference type="GO" id="GO:0016079">
    <property type="term" value="P:synaptic vesicle exocytosis"/>
    <property type="evidence" value="ECO:0007669"/>
    <property type="project" value="Ensembl"/>
</dbReference>
<dbReference type="GO" id="GO:0033077">
    <property type="term" value="P:T cell differentiation in thymus"/>
    <property type="evidence" value="ECO:0007669"/>
    <property type="project" value="Ensembl"/>
</dbReference>
<dbReference type="GO" id="GO:0050852">
    <property type="term" value="P:T cell receptor signaling pathway"/>
    <property type="evidence" value="ECO:0007669"/>
    <property type="project" value="Ensembl"/>
</dbReference>
<dbReference type="GO" id="GO:0048538">
    <property type="term" value="P:thymus development"/>
    <property type="evidence" value="ECO:0007669"/>
    <property type="project" value="Ensembl"/>
</dbReference>
<dbReference type="GO" id="GO:0030878">
    <property type="term" value="P:thyroid gland development"/>
    <property type="evidence" value="ECO:0007669"/>
    <property type="project" value="Ensembl"/>
</dbReference>
<dbReference type="GO" id="GO:0008542">
    <property type="term" value="P:visual learning"/>
    <property type="evidence" value="ECO:0007669"/>
    <property type="project" value="Ensembl"/>
</dbReference>
<dbReference type="CDD" id="cd20871">
    <property type="entry name" value="C1_B-Raf"/>
    <property type="match status" value="1"/>
</dbReference>
<dbReference type="CDD" id="cd17134">
    <property type="entry name" value="RBD_BRAF"/>
    <property type="match status" value="1"/>
</dbReference>
<dbReference type="CDD" id="cd14062">
    <property type="entry name" value="STKc_Raf"/>
    <property type="match status" value="1"/>
</dbReference>
<dbReference type="FunFam" id="3.10.20.90:FF:000015">
    <property type="entry name" value="B-Raf proto-oncogene serine/threonine-protein kinase"/>
    <property type="match status" value="1"/>
</dbReference>
<dbReference type="FunFam" id="3.30.200.20:FF:000024">
    <property type="entry name" value="B-Raf proto-oncogene serine/threonine-protein kinase"/>
    <property type="match status" value="1"/>
</dbReference>
<dbReference type="FunFam" id="3.30.60.20:FF:000004">
    <property type="entry name" value="B-Raf proto-oncogene serine/threonine-protein kinase"/>
    <property type="match status" value="1"/>
</dbReference>
<dbReference type="FunFam" id="1.10.510.10:FF:000036">
    <property type="entry name" value="RAF proto-oncogene serine/threonine-protein kinase"/>
    <property type="match status" value="1"/>
</dbReference>
<dbReference type="Gene3D" id="3.30.60.20">
    <property type="match status" value="1"/>
</dbReference>
<dbReference type="Gene3D" id="3.10.20.90">
    <property type="entry name" value="Phosphatidylinositol 3-kinase Catalytic Subunit, Chain A, domain 1"/>
    <property type="match status" value="1"/>
</dbReference>
<dbReference type="Gene3D" id="3.30.200.20">
    <property type="entry name" value="Phosphorylase Kinase, domain 1"/>
    <property type="match status" value="1"/>
</dbReference>
<dbReference type="Gene3D" id="1.10.510.10">
    <property type="entry name" value="Transferase(Phosphotransferase) domain 1"/>
    <property type="match status" value="1"/>
</dbReference>
<dbReference type="InterPro" id="IPR046349">
    <property type="entry name" value="C1-like_sf"/>
</dbReference>
<dbReference type="InterPro" id="IPR020454">
    <property type="entry name" value="DAG/PE-bd"/>
</dbReference>
<dbReference type="InterPro" id="IPR011009">
    <property type="entry name" value="Kinase-like_dom_sf"/>
</dbReference>
<dbReference type="InterPro" id="IPR002219">
    <property type="entry name" value="PE/DAG-bd"/>
</dbReference>
<dbReference type="InterPro" id="IPR000719">
    <property type="entry name" value="Prot_kinase_dom"/>
</dbReference>
<dbReference type="InterPro" id="IPR017441">
    <property type="entry name" value="Protein_kinase_ATP_BS"/>
</dbReference>
<dbReference type="InterPro" id="IPR003116">
    <property type="entry name" value="RBD_dom"/>
</dbReference>
<dbReference type="InterPro" id="IPR001245">
    <property type="entry name" value="Ser-Thr/Tyr_kinase_cat_dom"/>
</dbReference>
<dbReference type="InterPro" id="IPR008271">
    <property type="entry name" value="Ser/Thr_kinase_AS"/>
</dbReference>
<dbReference type="InterPro" id="IPR051681">
    <property type="entry name" value="Ser/Thr_Kinases-Pseudokinases"/>
</dbReference>
<dbReference type="InterPro" id="IPR029071">
    <property type="entry name" value="Ubiquitin-like_domsf"/>
</dbReference>
<dbReference type="PANTHER" id="PTHR44329">
    <property type="entry name" value="SERINE/THREONINE-PROTEIN KINASE TNNI3K-RELATED"/>
    <property type="match status" value="1"/>
</dbReference>
<dbReference type="PANTHER" id="PTHR44329:SF240">
    <property type="entry name" value="SERINE_THREONINE-PROTEIN KINASE B-RAF"/>
    <property type="match status" value="1"/>
</dbReference>
<dbReference type="Pfam" id="PF00130">
    <property type="entry name" value="C1_1"/>
    <property type="match status" value="1"/>
</dbReference>
<dbReference type="Pfam" id="PF07714">
    <property type="entry name" value="PK_Tyr_Ser-Thr"/>
    <property type="match status" value="1"/>
</dbReference>
<dbReference type="Pfam" id="PF02196">
    <property type="entry name" value="RBD"/>
    <property type="match status" value="1"/>
</dbReference>
<dbReference type="PRINTS" id="PR00008">
    <property type="entry name" value="DAGPEDOMAIN"/>
</dbReference>
<dbReference type="SMART" id="SM00109">
    <property type="entry name" value="C1"/>
    <property type="match status" value="1"/>
</dbReference>
<dbReference type="SMART" id="SM00455">
    <property type="entry name" value="RBD"/>
    <property type="match status" value="1"/>
</dbReference>
<dbReference type="SMART" id="SM00220">
    <property type="entry name" value="S_TKc"/>
    <property type="match status" value="1"/>
</dbReference>
<dbReference type="SUPFAM" id="SSF57889">
    <property type="entry name" value="Cysteine-rich domain"/>
    <property type="match status" value="1"/>
</dbReference>
<dbReference type="SUPFAM" id="SSF56112">
    <property type="entry name" value="Protein kinase-like (PK-like)"/>
    <property type="match status" value="1"/>
</dbReference>
<dbReference type="SUPFAM" id="SSF54236">
    <property type="entry name" value="Ubiquitin-like"/>
    <property type="match status" value="1"/>
</dbReference>
<dbReference type="PROSITE" id="PS00107">
    <property type="entry name" value="PROTEIN_KINASE_ATP"/>
    <property type="match status" value="1"/>
</dbReference>
<dbReference type="PROSITE" id="PS50011">
    <property type="entry name" value="PROTEIN_KINASE_DOM"/>
    <property type="match status" value="1"/>
</dbReference>
<dbReference type="PROSITE" id="PS00108">
    <property type="entry name" value="PROTEIN_KINASE_ST"/>
    <property type="match status" value="1"/>
</dbReference>
<dbReference type="PROSITE" id="PS50898">
    <property type="entry name" value="RBD"/>
    <property type="match status" value="1"/>
</dbReference>
<dbReference type="PROSITE" id="PS00479">
    <property type="entry name" value="ZF_DAG_PE_1"/>
    <property type="match status" value="1"/>
</dbReference>
<dbReference type="PROSITE" id="PS50081">
    <property type="entry name" value="ZF_DAG_PE_2"/>
    <property type="match status" value="1"/>
</dbReference>
<keyword id="KW-0002">3D-structure</keyword>
<keyword id="KW-0007">Acetylation</keyword>
<keyword id="KW-0021">Allosteric enzyme</keyword>
<keyword id="KW-0067">ATP-binding</keyword>
<keyword id="KW-0122">Cardiomyopathy</keyword>
<keyword id="KW-1003">Cell membrane</keyword>
<keyword id="KW-0160">Chromosomal rearrangement</keyword>
<keyword id="KW-0963">Cytoplasm</keyword>
<keyword id="KW-0209">Deafness</keyword>
<keyword id="KW-0903">Direct protein sequencing</keyword>
<keyword id="KW-0225">Disease variant</keyword>
<keyword id="KW-0038">Ectodermal dysplasia</keyword>
<keyword id="KW-0991">Intellectual disability</keyword>
<keyword id="KW-1017">Isopeptide bond</keyword>
<keyword id="KW-0418">Kinase</keyword>
<keyword id="KW-0472">Membrane</keyword>
<keyword id="KW-0479">Metal-binding</keyword>
<keyword id="KW-0488">Methylation</keyword>
<keyword id="KW-0547">Nucleotide-binding</keyword>
<keyword id="KW-0539">Nucleus</keyword>
<keyword id="KW-0597">Phosphoprotein</keyword>
<keyword id="KW-1267">Proteomics identification</keyword>
<keyword id="KW-0656">Proto-oncogene</keyword>
<keyword id="KW-1185">Reference proteome</keyword>
<keyword id="KW-0723">Serine/threonine-protein kinase</keyword>
<keyword id="KW-0808">Transferase</keyword>
<keyword id="KW-0832">Ubl conjugation</keyword>
<keyword id="KW-0862">Zinc</keyword>
<keyword id="KW-0863">Zinc-finger</keyword>
<comment type="function">
    <text evidence="14 25 32 35 37">Protein kinase involved in the transduction of mitogenic signals from the cell membrane to the nucleus (Probable). Phosphorylates MAP2K1, and thereby activates the MAP kinase signal transduction pathway (PubMed:21441910, PubMed:29433126). Phosphorylates PFKFB2 (PubMed:36402789). May play a role in the postsynaptic responses of hippocampal neurons (PubMed:1508179).</text>
</comment>
<comment type="catalytic activity">
    <reaction evidence="25 32">
        <text>L-seryl-[protein] + ATP = O-phospho-L-seryl-[protein] + ADP + H(+)</text>
        <dbReference type="Rhea" id="RHEA:17989"/>
        <dbReference type="Rhea" id="RHEA-COMP:9863"/>
        <dbReference type="Rhea" id="RHEA-COMP:11604"/>
        <dbReference type="ChEBI" id="CHEBI:15378"/>
        <dbReference type="ChEBI" id="CHEBI:29999"/>
        <dbReference type="ChEBI" id="CHEBI:30616"/>
        <dbReference type="ChEBI" id="CHEBI:83421"/>
        <dbReference type="ChEBI" id="CHEBI:456216"/>
        <dbReference type="EC" id="2.7.11.1"/>
    </reaction>
</comment>
<comment type="catalytic activity">
    <reaction evidence="25">
        <text>L-threonyl-[protein] + ATP = O-phospho-L-threonyl-[protein] + ADP + H(+)</text>
        <dbReference type="Rhea" id="RHEA:46608"/>
        <dbReference type="Rhea" id="RHEA-COMP:11060"/>
        <dbReference type="Rhea" id="RHEA-COMP:11605"/>
        <dbReference type="ChEBI" id="CHEBI:15378"/>
        <dbReference type="ChEBI" id="CHEBI:30013"/>
        <dbReference type="ChEBI" id="CHEBI:30616"/>
        <dbReference type="ChEBI" id="CHEBI:61977"/>
        <dbReference type="ChEBI" id="CHEBI:456216"/>
        <dbReference type="EC" id="2.7.11.1"/>
    </reaction>
</comment>
<comment type="cofactor">
    <cofactor evidence="1">
        <name>Zn(2+)</name>
        <dbReference type="ChEBI" id="CHEBI:29105"/>
    </cofactor>
    <text evidence="1">Binds 2 Zn(2+) ions per subunit.</text>
</comment>
<comment type="activity regulation">
    <text evidence="32">In quiescent cells, maintained in an inactive state via an intramolecular interaction between the protein kinase and N-terminal domains. Following mitogen-mediated cell activation, binds via its RGB domain to active HRAS (GTP-bound) which releases the inhibitory intramolecular interaction between the two domains. This allows the MAP2K1-mediated dimerization of KSR1 or KSR2, and BRAF which activates BRAF.</text>
</comment>
<comment type="subunit">
    <text evidence="1 20 23 24 25 26 31 32 35">Monomer (PubMed:19710016). Homodimer (PubMed:19710016, PubMed:36402789). Heterodimerizes with RAF1, and the heterodimer possesses a highly increased kinase activity compared to the respective homodimers or monomers (PubMed:19710016). Heterodimerization is mitogen-regulated and enhanced by 14-3-3 proteins. MAPK1/ERK2 activation can induce a negative feedback that promotes the dissociation of the heterodimer by phosphorylating BRAF at Thr-753. Heterodimerizes (via N-terminus) with KSR1 (via N-terminus) or KSR2 (via N-terminus) in a MAP2K1-dependent manner (PubMed:29433126). Interacts with MAP2K1 and MAP2K2 (PubMed:29433126). Found in a complex with at least BRAF, HRAS, MAP2K1, MAPK3 and RGS14. Interacts with RIT1. Interacts (via N-terminus) with RGS14 (via RBD domains); the interaction mediates the formation of a ternary complex with RAF1, a ternary complex inhibited by GNAI1 (By similarity). Interacts with DGKH (PubMed:19710016). Interacts with PRMT5 (PubMed:21917714). Interacts with KSR2 (PubMed:21441910). Interacts with AKAP13, MAP2K1 and KSR1. Identified in a complex with AKAP13, MAP2K1 and KSR1 (PubMed:21102438). Interacts with FNIP1 and FNIP2 (PubMed:27353360).</text>
</comment>
<comment type="interaction">
    <interactant intactId="EBI-365980">
        <id>P15056</id>
    </interactant>
    <interactant intactId="EBI-365980">
        <id>P15056</id>
        <label>BRAF</label>
    </interactant>
    <organismsDiffer>false</organismsDiffer>
    <experiments>13</experiments>
</comment>
<comment type="interaction">
    <interactant intactId="EBI-365980">
        <id>P15056</id>
    </interactant>
    <interactant intactId="EBI-350145">
        <id>P01112</id>
        <label>HRAS</label>
    </interactant>
    <organismsDiffer>false</organismsDiffer>
    <experiments>8</experiments>
</comment>
<comment type="interaction">
    <interactant intactId="EBI-365980">
        <id>P15056</id>
    </interactant>
    <interactant intactId="EBI-352572">
        <id>P08238</id>
        <label>HSP90AB1</label>
    </interactant>
    <organismsDiffer>false</organismsDiffer>
    <experiments>4</experiments>
</comment>
<comment type="interaction">
    <interactant intactId="EBI-365980">
        <id>P15056</id>
    </interactant>
    <interactant intactId="EBI-297509">
        <id>P46940</id>
        <label>IQGAP1</label>
    </interactant>
    <organismsDiffer>false</organismsDiffer>
    <experiments>4</experiments>
</comment>
<comment type="interaction">
    <interactant intactId="EBI-365980">
        <id>P15056</id>
    </interactant>
    <interactant intactId="EBI-492564">
        <id>Q02750</id>
        <label>MAP2K1</label>
    </interactant>
    <organismsDiffer>false</organismsDiffer>
    <experiments>63</experiments>
</comment>
<comment type="interaction">
    <interactant intactId="EBI-365980">
        <id>P15056</id>
    </interactant>
    <interactant intactId="EBI-1056930">
        <id>P36507</id>
        <label>MAP2K2</label>
    </interactant>
    <organismsDiffer>false</organismsDiffer>
    <experiments>12</experiments>
</comment>
<comment type="interaction">
    <interactant intactId="EBI-365980">
        <id>P15056</id>
    </interactant>
    <interactant intactId="EBI-49776">
        <id>Q13233</id>
        <label>MAP3K1</label>
    </interactant>
    <organismsDiffer>false</organismsDiffer>
    <experiments>2</experiments>
</comment>
<comment type="interaction">
    <interactant intactId="EBI-365980">
        <id>P15056</id>
    </interactant>
    <interactant intactId="EBI-721993">
        <id>P01111</id>
        <label>NRAS</label>
    </interactant>
    <organismsDiffer>false</organismsDiffer>
    <experiments>6</experiments>
</comment>
<comment type="interaction">
    <interactant intactId="EBI-365980">
        <id>P15056</id>
    </interactant>
    <interactant intactId="EBI-706254">
        <id>Q02156</id>
        <label>PRKCE</label>
    </interactant>
    <organismsDiffer>false</organismsDiffer>
    <experiments>3</experiments>
</comment>
<comment type="interaction">
    <interactant intactId="EBI-365980">
        <id>P15056</id>
    </interactant>
    <interactant intactId="EBI-365996">
        <id>P04049</id>
        <label>RAF1</label>
    </interactant>
    <organismsDiffer>false</organismsDiffer>
    <experiments>72</experiments>
</comment>
<comment type="interaction">
    <interactant intactId="EBI-365980">
        <id>P15056</id>
    </interactant>
    <interactant intactId="EBI-1384149">
        <id>Q15349</id>
        <label>RPS6KA2</label>
    </interactant>
    <organismsDiffer>false</organismsDiffer>
    <experiments>2</experiments>
</comment>
<comment type="interaction">
    <interactant intactId="EBI-365980">
        <id>P15056</id>
    </interactant>
    <interactant intactId="EBI-476295">
        <id>P31947</id>
        <label>SFN</label>
    </interactant>
    <organismsDiffer>false</organismsDiffer>
    <experiments>5</experiments>
</comment>
<comment type="interaction">
    <interactant intactId="EBI-365980">
        <id>P15056</id>
    </interactant>
    <interactant intactId="EBI-357631">
        <id>Q13114</id>
        <label>TRAF3</label>
    </interactant>
    <organismsDiffer>false</organismsDiffer>
    <experiments>2</experiments>
</comment>
<comment type="interaction">
    <interactant intactId="EBI-365980">
        <id>P15056</id>
    </interactant>
    <interactant intactId="EBI-359815">
        <id>P31946</id>
        <label>YWHAB</label>
    </interactant>
    <organismsDiffer>false</organismsDiffer>
    <experiments>9</experiments>
</comment>
<comment type="interaction">
    <interactant intactId="EBI-365980">
        <id>P15056</id>
    </interactant>
    <interactant intactId="EBI-356498">
        <id>P62258</id>
        <label>YWHAE</label>
    </interactant>
    <organismsDiffer>false</organismsDiffer>
    <experiments>10</experiments>
</comment>
<comment type="interaction">
    <interactant intactId="EBI-365980">
        <id>P15056</id>
    </interactant>
    <interactant intactId="EBI-347088">
        <id>P63104</id>
        <label>YWHAZ</label>
    </interactant>
    <organismsDiffer>false</organismsDiffer>
    <experiments>11</experiments>
</comment>
<comment type="interaction">
    <interactant intactId="EBI-365980">
        <id>P15056</id>
    </interactant>
    <interactant intactId="EBI-1536336">
        <id>Q61097</id>
        <label>Ksr1</label>
    </interactant>
    <organismsDiffer>true</organismsDiffer>
    <experiments>3</experiments>
</comment>
<comment type="interaction">
    <interactant intactId="EBI-365980">
        <id>P15056</id>
    </interactant>
    <interactant intactId="EBI-1631983">
        <id>P29678</id>
        <label>MAP2K1</label>
    </interactant>
    <organismsDiffer>true</organismsDiffer>
    <experiments>2</experiments>
</comment>
<comment type="interaction">
    <interactant intactId="EBI-365980">
        <id>P15056</id>
    </interactant>
    <interactant intactId="EBI-397757">
        <id>Q99N57</id>
        <label>Raf1</label>
    </interactant>
    <organismsDiffer>true</organismsDiffer>
    <experiments>3</experiments>
</comment>
<comment type="interaction">
    <interactant intactId="EBI-365980">
        <id>P15056</id>
    </interactant>
    <interactant intactId="EBI-7340552">
        <id>Q8CGE9</id>
        <label>Rgs12</label>
    </interactant>
    <organismsDiffer>true</organismsDiffer>
    <experiments>2</experiments>
</comment>
<comment type="subcellular location">
    <subcellularLocation>
        <location evidence="1">Nucleus</location>
    </subcellularLocation>
    <subcellularLocation>
        <location evidence="23">Cytoplasm</location>
    </subcellularLocation>
    <subcellularLocation>
        <location evidence="23">Cell membrane</location>
    </subcellularLocation>
    <text evidence="1">Colocalizes with RGS14 and RAF1 in both the cytoplasm and membranes.</text>
</comment>
<comment type="tissue specificity">
    <text>Brain and testis.</text>
</comment>
<comment type="PTM">
    <text evidence="8 23 33 34 36">Phosphorylation at Ser-365 by SGK1 inhibits its activity (Ref.8, PubMed:11410590). Phosphorylation at Thr-753 by MAPK1 (PubMed:19710016). Dephosphorylation of Ser-365 by the SHOC2-MRAS-PP1c (SMP) complex consisting of SHOC2, GTP-bound M-Ras/MRAS and the catalytic subunit of protein phosphatase 1 (PPP1CA, PPP1CB or PPP1CC); this relieves inactivation and stimulates kinase activity (PubMed:35768504, PubMed:35830882).</text>
</comment>
<comment type="PTM">
    <text evidence="26">Methylation at Arg-671 decreases stability and kinase activity.</text>
</comment>
<comment type="PTM">
    <text evidence="27 29">Ubiquitinated by RNF149; which leads to proteasomal degradation. Polyubiquitinated at Lys-578 in response to EGF.</text>
</comment>
<comment type="disease">
    <text evidence="21">Defects in BRAF are found in a wide range of cancers.</text>
</comment>
<comment type="disease" evidence="10 26 28 30">
    <disease id="DI-01359">
        <name>Colorectal cancer</name>
        <acronym>CRC</acronym>
        <description>A complex disease characterized by malignant lesions arising from the inner wall of the large intestine (the colon) and the rectum. Genetic alterations are often associated with progression from premalignant lesion (adenoma) to invasive adenocarcinoma. Risk factors for cancer of the colon and rectum include colon polyps, long-standing ulcerative colitis, and genetic family history.</description>
        <dbReference type="MIM" id="114500"/>
    </disease>
    <text>The disease may be caused by variants affecting the gene represented in this entry.</text>
</comment>
<comment type="disease" evidence="11">
    <disease id="DI-02205">
        <name>Lung cancer</name>
        <acronym>LNCR</acronym>
        <description>A common malignancy affecting tissues of the lung. The most common form of lung cancer is non-small cell lung cancer (NSCLC) that can be divided into 3 major histologic subtypes: squamous cell carcinoma, adenocarcinoma, and large cell lung cancer. NSCLC is often diagnosed at an advanced stage and has a poor prognosis.</description>
        <dbReference type="MIM" id="211980"/>
    </disease>
    <text>The gene represented in this entry is involved in disease pathogenesis.</text>
</comment>
<comment type="disease" evidence="13">
    <disease id="DI-01594">
        <name>Familial non-Hodgkin lymphoma</name>
        <acronym>NHL</acronym>
        <description>Cancer that starts in cells of the lymph system, which is part of the body's immune system. NHLs can occur at any age and are often marked by enlarged lymph nodes, fever and weight loss.</description>
        <dbReference type="MIM" id="605027"/>
    </disease>
    <text>The gene represented in this entry is involved in disease pathogenesis.</text>
</comment>
<comment type="disease" evidence="15 16 19 22">
    <disease id="DI-01318">
        <name>Cardiofaciocutaneous syndrome 1</name>
        <acronym>CFC1</acronym>
        <description>A multiple congenital anomaly disorder characterized by a distinctive facial appearance, heart defects and intellectual disability. Heart defects include pulmonic stenosis, atrial septal defects and hypertrophic cardiomyopathy. Some affected individuals present with ectodermal abnormalities such as sparse, friable hair, hyperkeratotic skin lesions and a generalized ichthyosis-like condition. Typical facial features are similar to Noonan syndrome. They include high forehead with bitemporal constriction, hypoplastic supraorbital ridges, downslanting palpebral fissures, a depressed nasal bridge, and posteriorly angulated ears with prominent helices.</description>
        <dbReference type="MIM" id="115150"/>
    </disease>
    <text>The disease is caused by variants affecting the gene represented in this entry.</text>
</comment>
<comment type="disease" evidence="22">
    <disease id="DI-02990">
        <name>Noonan syndrome 7</name>
        <acronym>NS7</acronym>
        <description>A form of Noonan syndrome, a disease characterized by short stature, facial dysmorphic features such as hypertelorism, a downward eyeslant and low-set posteriorly rotated ears, and a high incidence of congenital heart defects and hypertrophic cardiomyopathy. Other features can include a short neck with webbing or redundancy of skin, deafness, motor delay, variable intellectual deficits, multiple skeletal defects, cryptorchidism, and bleeding diathesis. Individuals with Noonan syndrome are at risk of juvenile myelomonocytic leukemia, a myeloproliferative disorder characterized by excessive production of myelomonocytic cells.</description>
        <dbReference type="MIM" id="613706"/>
    </disease>
    <text>The disease is caused by variants affecting the gene represented in this entry.</text>
</comment>
<comment type="disease" evidence="22">
    <disease id="DI-02991">
        <name>LEOPARD syndrome 3</name>
        <acronym>LPRD3</acronym>
        <description>A disorder characterized by lentigines, electrocardiographic conduction abnormalities, ocular hypertelorism, pulmonic stenosis, abnormalities of genitalia, retardation of growth, and sensorineural deafness.</description>
        <dbReference type="MIM" id="613707"/>
    </disease>
    <text>The disease is caused by variants affecting the gene represented in this entry.</text>
</comment>
<comment type="disease">
    <text evidence="21">A chromosomal aberration involving BRAF is found in pilocytic astrocytomas. A tandem duplication of 2 Mb at 7q34 leads to the expression of a KIAA1549-BRAF fusion protein with a constitutive kinase activity and inducing cell transformation.</text>
</comment>
<comment type="similarity">
    <text evidence="37">Belongs to the protein kinase superfamily. TKL Ser/Thr protein kinase family. RAF subfamily.</text>
</comment>
<comment type="sequence caution" evidence="37">
    <conflict type="erroneous gene model prediction">
        <sequence resource="EMBL-CDS" id="AAD43193"/>
    </conflict>
</comment>
<comment type="sequence caution" evidence="37">
    <conflict type="erroneous initiation">
        <sequence resource="EMBL-CDS" id="CAQ43111"/>
    </conflict>
    <text>Extended N-terminus.</text>
</comment>
<comment type="sequence caution" evidence="37">
    <conflict type="erroneous initiation">
        <sequence resource="EMBL-CDS" id="CAQ43112"/>
    </conflict>
    <text>Extended N-terminus.</text>
</comment>
<comment type="sequence caution" evidence="37">
    <conflict type="erroneous initiation">
        <sequence resource="EMBL-CDS" id="CAQ43113"/>
    </conflict>
    <text>Extended N-terminus.</text>
</comment>
<comment type="sequence caution" evidence="37">
    <conflict type="erroneous initiation">
        <sequence resource="EMBL-CDS" id="CAQ43114"/>
    </conflict>
    <text>Extended N-terminus.</text>
</comment>
<comment type="sequence caution" evidence="37">
    <conflict type="erroneous initiation">
        <sequence resource="EMBL-CDS" id="CAQ43115"/>
    </conflict>
    <text>Extended N-terminus.</text>
</comment>
<comment type="sequence caution" evidence="37">
    <conflict type="erroneous initiation">
        <sequence resource="EMBL-CDS" id="CAQ43116"/>
    </conflict>
    <text>Extended N-terminus.</text>
</comment>
<comment type="online information" name="Atlas of Genetics and Cytogenetics in Oncology and Haematology">
    <link uri="https://atlasgeneticsoncology.org/gene/828/BRAF"/>
</comment>
<gene>
    <name evidence="38" type="primary">BRAF</name>
    <name type="synonym">BRAF1</name>
    <name type="synonym">RAFB1</name>
</gene>
<evidence type="ECO:0000250" key="1"/>
<evidence type="ECO:0000250" key="2">
    <source>
        <dbReference type="UniProtKB" id="P28028"/>
    </source>
</evidence>
<evidence type="ECO:0000255" key="3">
    <source>
        <dbReference type="PROSITE-ProRule" id="PRU00159"/>
    </source>
</evidence>
<evidence type="ECO:0000255" key="4">
    <source>
        <dbReference type="PROSITE-ProRule" id="PRU00226"/>
    </source>
</evidence>
<evidence type="ECO:0000255" key="5">
    <source>
        <dbReference type="PROSITE-ProRule" id="PRU00262"/>
    </source>
</evidence>
<evidence type="ECO:0000255" key="6">
    <source>
        <dbReference type="PROSITE-ProRule" id="PRU10027"/>
    </source>
</evidence>
<evidence type="ECO:0000256" key="7">
    <source>
        <dbReference type="SAM" id="MobiDB-lite"/>
    </source>
</evidence>
<evidence type="ECO:0000269" key="8">
    <source>
    </source>
</evidence>
<evidence type="ECO:0000269" key="9">
    <source>
    </source>
</evidence>
<evidence type="ECO:0000269" key="10">
    <source>
    </source>
</evidence>
<evidence type="ECO:0000269" key="11">
    <source>
    </source>
</evidence>
<evidence type="ECO:0000269" key="12">
    <source>
    </source>
</evidence>
<evidence type="ECO:0000269" key="13">
    <source>
    </source>
</evidence>
<evidence type="ECO:0000269" key="14">
    <source>
    </source>
</evidence>
<evidence type="ECO:0000269" key="15">
    <source>
    </source>
</evidence>
<evidence type="ECO:0000269" key="16">
    <source>
    </source>
</evidence>
<evidence type="ECO:0000269" key="17">
    <source>
    </source>
</evidence>
<evidence type="ECO:0000269" key="18">
    <source>
    </source>
</evidence>
<evidence type="ECO:0000269" key="19">
    <source>
    </source>
</evidence>
<evidence type="ECO:0000269" key="20">
    <source>
    </source>
</evidence>
<evidence type="ECO:0000269" key="21">
    <source>
    </source>
</evidence>
<evidence type="ECO:0000269" key="22">
    <source>
    </source>
</evidence>
<evidence type="ECO:0000269" key="23">
    <source>
    </source>
</evidence>
<evidence type="ECO:0000269" key="24">
    <source>
    </source>
</evidence>
<evidence type="ECO:0000269" key="25">
    <source>
    </source>
</evidence>
<evidence type="ECO:0000269" key="26">
    <source>
    </source>
</evidence>
<evidence type="ECO:0000269" key="27">
    <source>
    </source>
</evidence>
<evidence type="ECO:0000269" key="28">
    <source>
    </source>
</evidence>
<evidence type="ECO:0000269" key="29">
    <source>
    </source>
</evidence>
<evidence type="ECO:0000269" key="30">
    <source>
    </source>
</evidence>
<evidence type="ECO:0000269" key="31">
    <source>
    </source>
</evidence>
<evidence type="ECO:0000269" key="32">
    <source>
    </source>
</evidence>
<evidence type="ECO:0000269" key="33">
    <source>
    </source>
</evidence>
<evidence type="ECO:0000269" key="34">
    <source>
    </source>
</evidence>
<evidence type="ECO:0000269" key="35">
    <source>
    </source>
</evidence>
<evidence type="ECO:0000269" key="36">
    <source ref="8"/>
</evidence>
<evidence type="ECO:0000305" key="37"/>
<evidence type="ECO:0000312" key="38">
    <source>
        <dbReference type="HGNC" id="HGNC:1097"/>
    </source>
</evidence>
<evidence type="ECO:0007744" key="39">
    <source>
        <dbReference type="PDB" id="5VR3"/>
    </source>
</evidence>
<evidence type="ECO:0007744" key="40">
    <source>
        <dbReference type="PDB" id="5VYK"/>
    </source>
</evidence>
<evidence type="ECO:0007744" key="41">
    <source>
    </source>
</evidence>
<evidence type="ECO:0007744" key="42">
    <source>
    </source>
</evidence>
<evidence type="ECO:0007744" key="43">
    <source>
    </source>
</evidence>
<evidence type="ECO:0007744" key="44">
    <source>
    </source>
</evidence>
<evidence type="ECO:0007744" key="45">
    <source>
    </source>
</evidence>
<evidence type="ECO:0007829" key="46">
    <source>
        <dbReference type="PDB" id="3NY5"/>
    </source>
</evidence>
<evidence type="ECO:0007829" key="47">
    <source>
        <dbReference type="PDB" id="4RZV"/>
    </source>
</evidence>
<evidence type="ECO:0007829" key="48">
    <source>
        <dbReference type="PDB" id="5JRQ"/>
    </source>
</evidence>
<evidence type="ECO:0007829" key="49">
    <source>
        <dbReference type="PDB" id="5VYK"/>
    </source>
</evidence>
<evidence type="ECO:0007829" key="50">
    <source>
        <dbReference type="PDB" id="6P3D"/>
    </source>
</evidence>
<evidence type="ECO:0007829" key="51">
    <source>
        <dbReference type="PDB" id="6U2H"/>
    </source>
</evidence>
<evidence type="ECO:0007829" key="52">
    <source>
        <dbReference type="PDB" id="6XFP"/>
    </source>
</evidence>
<evidence type="ECO:0007829" key="53">
    <source>
        <dbReference type="PDB" id="8C7X"/>
    </source>
</evidence>
<protein>
    <recommendedName>
        <fullName evidence="37">Serine/threonine-protein kinase B-raf</fullName>
        <ecNumber evidence="25 32">2.7.11.1</ecNumber>
    </recommendedName>
    <alternativeName>
        <fullName>Proto-oncogene B-Raf</fullName>
    </alternativeName>
    <alternativeName>
        <fullName>p94</fullName>
    </alternativeName>
    <alternativeName>
        <fullName>v-Raf murine sarcoma viral oncogene homolog B1</fullName>
    </alternativeName>
</protein>